<proteinExistence type="evidence at protein level"/>
<reference key="1">
    <citation type="journal article" date="1981" name="Mol. Gen. Genet.">
        <title>Cloning and the nucleotide sequence of the genes for Escherichia coli ribosomal proteins L28 (rpmB) and L33 (rpmG).</title>
        <authorList>
            <person name="Lee J.S."/>
            <person name="An G."/>
            <person name="Friesen J.D."/>
            <person name="Isono K."/>
        </authorList>
    </citation>
    <scope>NUCLEOTIDE SEQUENCE [GENOMIC DNA]</scope>
</reference>
<reference key="2">
    <citation type="journal article" date="1993" name="Genomics">
        <title>DNA sequence and analysis of 136 kilobases of the Escherichia coli genome: organizational symmetry around the origin of replication.</title>
        <authorList>
            <person name="Burland V.D."/>
            <person name="Plunkett G. III"/>
            <person name="Daniels D.L."/>
            <person name="Blattner F.R."/>
        </authorList>
    </citation>
    <scope>NUCLEOTIDE SEQUENCE [LARGE SCALE GENOMIC DNA]</scope>
    <source>
        <strain>K12 / MG1655 / ATCC 47076</strain>
    </source>
</reference>
<reference key="3">
    <citation type="journal article" date="1997" name="Science">
        <title>The complete genome sequence of Escherichia coli K-12.</title>
        <authorList>
            <person name="Blattner F.R."/>
            <person name="Plunkett G. III"/>
            <person name="Bloch C.A."/>
            <person name="Perna N.T."/>
            <person name="Burland V."/>
            <person name="Riley M."/>
            <person name="Collado-Vides J."/>
            <person name="Glasner J.D."/>
            <person name="Rode C.K."/>
            <person name="Mayhew G.F."/>
            <person name="Gregor J."/>
            <person name="Davis N.W."/>
            <person name="Kirkpatrick H.A."/>
            <person name="Goeden M.A."/>
            <person name="Rose D.J."/>
            <person name="Mau B."/>
            <person name="Shao Y."/>
        </authorList>
    </citation>
    <scope>NUCLEOTIDE SEQUENCE [LARGE SCALE GENOMIC DNA]</scope>
    <source>
        <strain>K12 / MG1655 / ATCC 47076</strain>
    </source>
</reference>
<reference key="4">
    <citation type="journal article" date="2006" name="Mol. Syst. Biol.">
        <title>Highly accurate genome sequences of Escherichia coli K-12 strains MG1655 and W3110.</title>
        <authorList>
            <person name="Hayashi K."/>
            <person name="Morooka N."/>
            <person name="Yamamoto Y."/>
            <person name="Fujita K."/>
            <person name="Isono K."/>
            <person name="Choi S."/>
            <person name="Ohtsubo E."/>
            <person name="Baba T."/>
            <person name="Wanner B.L."/>
            <person name="Mori H."/>
            <person name="Horiuchi T."/>
        </authorList>
    </citation>
    <scope>NUCLEOTIDE SEQUENCE [LARGE SCALE GENOMIC DNA]</scope>
    <source>
        <strain>K12 / W3110 / ATCC 27325 / DSM 5911</strain>
    </source>
</reference>
<reference key="5">
    <citation type="journal article" date="1977" name="FEBS Lett.">
        <title>Primary structure of protein L28 from the large subunit of Escherichia coli ribosomes.</title>
        <authorList>
            <person name="Wittmann-Liebold B."/>
            <person name="Marzinzig E."/>
        </authorList>
    </citation>
    <scope>PROTEIN SEQUENCE OF 2-78</scope>
    <scope>SUBUNIT</scope>
    <source>
        <strain>K12</strain>
    </source>
</reference>
<reference key="6">
    <citation type="journal article" date="1995" name="EMBO J.">
        <title>Protein-rRNA binding features and their structural and functional implications in ribosomes as determined by cross-linking studies.</title>
        <authorList>
            <person name="Urlaub H."/>
            <person name="Kruft V."/>
            <person name="Bischof O."/>
            <person name="Mueller E.-C."/>
            <person name="Wittmann-Liebold B."/>
        </authorList>
    </citation>
    <scope>PROTEIN SEQUENCE OF 55-66</scope>
    <scope>CROSS-LINKING TO RRNA</scope>
    <source>
        <strain>MRE-600</strain>
    </source>
</reference>
<reference key="7">
    <citation type="journal article" date="1997" name="Electrophoresis">
        <title>Escherichia coli proteome analysis using the gene-protein database.</title>
        <authorList>
            <person name="VanBogelen R.A."/>
            <person name="Abshire K.Z."/>
            <person name="Moldover B."/>
            <person name="Olson E.R."/>
            <person name="Neidhardt F.C."/>
        </authorList>
    </citation>
    <scope>IDENTIFICATION BY 2D-GEL</scope>
</reference>
<reference key="8">
    <citation type="journal article" date="1999" name="Anal. Biochem.">
        <title>Observation of Escherichia coli ribosomal proteins and their posttranslational modifications by mass spectrometry.</title>
        <authorList>
            <person name="Arnold R.J."/>
            <person name="Reilly J.P."/>
        </authorList>
    </citation>
    <scope>MASS SPECTROMETRY</scope>
    <scope>SUBUNIT</scope>
    <source>
        <strain>K12 / ATCC 25404 / DSM 5698 / NCIMB 11290</strain>
    </source>
</reference>
<reference key="9">
    <citation type="journal article" date="2014" name="Curr. Opin. Struct. Biol.">
        <title>A new system for naming ribosomal proteins.</title>
        <authorList>
            <person name="Ban N."/>
            <person name="Beckmann R."/>
            <person name="Cate J.H.D."/>
            <person name="Dinman J.D."/>
            <person name="Dragon F."/>
            <person name="Ellis S.R."/>
            <person name="Lafontaine D.L.J."/>
            <person name="Lindahl L."/>
            <person name="Liljas A."/>
            <person name="Lipton J.M."/>
            <person name="McAlear M.A."/>
            <person name="Moore P.B."/>
            <person name="Noller H.F."/>
            <person name="Ortega J."/>
            <person name="Panse V.G."/>
            <person name="Ramakrishnan V."/>
            <person name="Spahn C.M.T."/>
            <person name="Steitz T.A."/>
            <person name="Tchorzewski M."/>
            <person name="Tollervey D."/>
            <person name="Warren A.J."/>
            <person name="Williamson J.R."/>
            <person name="Wilson D."/>
            <person name="Yonath A."/>
            <person name="Yusupov M."/>
        </authorList>
    </citation>
    <scope>NOMENCLATURE</scope>
</reference>
<reference key="10">
    <citation type="journal article" date="2014" name="Cell Rep.">
        <title>Molecular basis for the ribosome functioning as an L-tryptophan sensor.</title>
        <authorList>
            <person name="Bischoff L."/>
            <person name="Berninghausen O."/>
            <person name="Beckmann R."/>
        </authorList>
    </citation>
    <scope>STRUCTURE BY ELECTRON MICROSCOPY (3.80 ANGSTROMS) OF 2-78 IN TNAC-STALLED 50S RIBOSOMAL SUBUNIT</scope>
    <scope>SUBUNIT</scope>
    <source>
        <strain>K12 / A19 / KC6</strain>
    </source>
</reference>
<reference key="11">
    <citation type="journal article" date="2014" name="PLoS Biol.">
        <title>Structural and functional insights into the mode of action of a universally conserved Obg GTPase.</title>
        <authorList>
            <person name="Feng B."/>
            <person name="Mandava C.S."/>
            <person name="Guo Q."/>
            <person name="Wang J."/>
            <person name="Cao W."/>
            <person name="Li N."/>
            <person name="Zhang Y."/>
            <person name="Zhang Y."/>
            <person name="Wang Z."/>
            <person name="Wu J."/>
            <person name="Sanyal S."/>
            <person name="Lei J."/>
            <person name="Gao N."/>
        </authorList>
    </citation>
    <scope>STRUCTURE BY ELECTRON MICROSCOPY (5.5 ANGSTROMS) OF 2-78 OF 50S RIBOSOMAL SUBUNIT IN COMPLEX WITH OBGE AND GMP-PNP</scope>
    <scope>SUBUNIT</scope>
</reference>
<reference key="12">
    <citation type="journal article" date="2017" name="Nature">
        <title>Mechanistic insights into the alternative translation termination by ArfA and RF2.</title>
        <authorList>
            <person name="Ma C."/>
            <person name="Kurita D."/>
            <person name="Li N."/>
            <person name="Chen Y."/>
            <person name="Himeno H."/>
            <person name="Gao N."/>
        </authorList>
    </citation>
    <scope>STRUCTURE BY ELECTRON MICROSCOPY (3.0 ANGSTROMS) OF 70S RIBOSOME IN COMPLEX WITH ARFA AND RF2</scope>
    <scope>SUBUNIT</scope>
</reference>
<reference key="13">
    <citation type="journal article" date="2017" name="Nature">
        <title>Structural basis for ArfA-RF2-mediated translation termination on mRNAs lacking stop codons.</title>
        <authorList>
            <person name="Huter P."/>
            <person name="Mueller C."/>
            <person name="Beckert B."/>
            <person name="Arenz S."/>
            <person name="Berninghausen O."/>
            <person name="Beckmann R."/>
            <person name="Wilson D.N."/>
        </authorList>
    </citation>
    <scope>STRUCTURE BY ELECTRON MICROSCOPY (3.1 ANGSTROMS) OF 70S RIBOSOME IN COMPLEX WITH ARFA AND RF2</scope>
    <scope>SUBUNIT</scope>
</reference>
<reference key="14">
    <citation type="journal article" date="2016" name="Science">
        <title>Translational termination without a stop codon.</title>
        <authorList>
            <person name="James N.R."/>
            <person name="Brown A."/>
            <person name="Gordiyenko Y."/>
            <person name="Ramakrishnan V."/>
        </authorList>
    </citation>
    <scope>STRUCTURE BY ELECTRON MICROSCOPY (2.97 ANGSTROMS) OF 70S RIBOSOME IN COMPLEX WITH ARFA AND RF2</scope>
    <scope>SUBUNIT</scope>
</reference>
<reference key="15">
    <citation type="journal article" date="2017" name="Nature">
        <title>Structural basis of co-translational quality control by ArfA and RF2 bound to ribosome.</title>
        <authorList>
            <person name="Zeng F."/>
            <person name="Chen Y."/>
            <person name="Remis J."/>
            <person name="Shekhar M."/>
            <person name="Phillips J.C."/>
            <person name="Tajkhorshid E."/>
            <person name="Jin H."/>
        </authorList>
    </citation>
    <scope>STRUCTURE BY ELECTRON MICROSCOPY (3.52 ANGSTROMS) OF 70S RIBOSOME IN COMPLEX WITH ARFA AND RF2</scope>
    <scope>SUBUNIT</scope>
</reference>
<comment type="subunit">
    <text evidence="1 2 3 4 5 6 7">Part of the 50S ribosomal subunit.</text>
</comment>
<comment type="interaction">
    <interactant intactId="EBI-543024">
        <id>P0A7M2</id>
    </interactant>
    <interactant intactId="EBI-549161">
        <id>P28631</id>
        <label>holB</label>
    </interactant>
    <organismsDiffer>false</organismsDiffer>
    <experiments>3</experiments>
</comment>
<comment type="interaction">
    <interactant intactId="EBI-543024">
        <id>P0A7M2</id>
    </interactant>
    <interactant intactId="EBI-1112732">
        <id>P0A7N4</id>
        <label>rpmF</label>
    </interactant>
    <organismsDiffer>false</organismsDiffer>
    <experiments>2</experiments>
</comment>
<comment type="interaction">
    <interactant intactId="EBI-543024">
        <id>P0A7M2</id>
    </interactant>
    <interactant intactId="EBI-544862">
        <id>P0A850</id>
        <label>tig</label>
    </interactant>
    <organismsDiffer>false</organismsDiffer>
    <experiments>4</experiments>
</comment>
<comment type="mass spectrometry" mass="8875.0" method="MALDI" evidence="1"/>
<comment type="similarity">
    <text evidence="9">Belongs to the bacterial ribosomal protein bL28 family.</text>
</comment>
<accession>P0A7M2</accession>
<accession>P02428</accession>
<accession>Q2M7V1</accession>
<gene>
    <name type="primary">rpmB</name>
    <name type="ordered locus">b3637</name>
    <name type="ordered locus">JW3612</name>
</gene>
<feature type="initiator methionine" description="Removed" evidence="7">
    <location>
        <position position="1"/>
    </location>
</feature>
<feature type="chain" id="PRO_0000178468" description="Large ribosomal subunit protein bL28">
    <location>
        <begin position="2"/>
        <end position="78"/>
    </location>
</feature>
<feature type="turn" evidence="10">
    <location>
        <begin position="6"/>
        <end position="8"/>
    </location>
</feature>
<feature type="strand" evidence="10">
    <location>
        <begin position="13"/>
        <end position="18"/>
    </location>
</feature>
<feature type="strand" evidence="10">
    <location>
        <begin position="24"/>
        <end position="29"/>
    </location>
</feature>
<feature type="strand" evidence="10">
    <location>
        <begin position="33"/>
        <end position="40"/>
    </location>
</feature>
<feature type="turn" evidence="10">
    <location>
        <begin position="41"/>
        <end position="44"/>
    </location>
</feature>
<feature type="strand" evidence="10">
    <location>
        <begin position="45"/>
        <end position="52"/>
    </location>
</feature>
<feature type="helix" evidence="10">
    <location>
        <begin position="53"/>
        <end position="62"/>
    </location>
</feature>
<feature type="helix" evidence="10">
    <location>
        <begin position="64"/>
        <end position="74"/>
    </location>
</feature>
<evidence type="ECO:0000269" key="1">
    <source>
    </source>
</evidence>
<evidence type="ECO:0000269" key="2">
    <source>
    </source>
</evidence>
<evidence type="ECO:0000269" key="3">
    <source>
    </source>
</evidence>
<evidence type="ECO:0000269" key="4">
    <source>
    </source>
</evidence>
<evidence type="ECO:0000269" key="5">
    <source>
    </source>
</evidence>
<evidence type="ECO:0000269" key="6">
    <source>
    </source>
</evidence>
<evidence type="ECO:0000269" key="7">
    <source>
    </source>
</evidence>
<evidence type="ECO:0000303" key="8">
    <source>
    </source>
</evidence>
<evidence type="ECO:0000305" key="9"/>
<evidence type="ECO:0007829" key="10">
    <source>
        <dbReference type="PDB" id="8CGK"/>
    </source>
</evidence>
<sequence length="78" mass="9006">MSRVCQVTGKRPVTGNNRSHALNATKRRFLPNLHSHRFWVESEKRFVTLRVSAKGMRVIDKKGIDTVLAELRARGEKY</sequence>
<dbReference type="EMBL" id="J01677">
    <property type="protein sequence ID" value="AAA74099.1"/>
    <property type="molecule type" value="Genomic_DNA"/>
</dbReference>
<dbReference type="EMBL" id="L10328">
    <property type="protein sequence ID" value="AAA61990.1"/>
    <property type="molecule type" value="Genomic_DNA"/>
</dbReference>
<dbReference type="EMBL" id="U00096">
    <property type="protein sequence ID" value="AAC76661.1"/>
    <property type="molecule type" value="Genomic_DNA"/>
</dbReference>
<dbReference type="EMBL" id="AP009048">
    <property type="protein sequence ID" value="BAE77655.1"/>
    <property type="molecule type" value="Genomic_DNA"/>
</dbReference>
<dbReference type="PIR" id="S42443">
    <property type="entry name" value="R5EC28"/>
</dbReference>
<dbReference type="RefSeq" id="NP_418094.1">
    <property type="nucleotide sequence ID" value="NC_000913.3"/>
</dbReference>
<dbReference type="RefSeq" id="WP_000091955.1">
    <property type="nucleotide sequence ID" value="NZ_STEB01000024.1"/>
</dbReference>
<dbReference type="PDB" id="3J5L">
    <property type="method" value="EM"/>
    <property type="resolution" value="6.60 A"/>
    <property type="chains" value="X=2-78"/>
</dbReference>
<dbReference type="PDB" id="3J7Z">
    <property type="method" value="EM"/>
    <property type="resolution" value="3.90 A"/>
    <property type="chains" value="X=1-78"/>
</dbReference>
<dbReference type="PDB" id="3J8G">
    <property type="method" value="EM"/>
    <property type="resolution" value="5.00 A"/>
    <property type="chains" value="0=1-78"/>
</dbReference>
<dbReference type="PDB" id="3J9Y">
    <property type="method" value="EM"/>
    <property type="resolution" value="3.90 A"/>
    <property type="chains" value="X=1-78"/>
</dbReference>
<dbReference type="PDB" id="3J9Z">
    <property type="method" value="EM"/>
    <property type="resolution" value="3.60 A"/>
    <property type="chains" value="LV=2-78"/>
</dbReference>
<dbReference type="PDB" id="3JA1">
    <property type="method" value="EM"/>
    <property type="resolution" value="3.60 A"/>
    <property type="chains" value="LZ=2-78"/>
</dbReference>
<dbReference type="PDB" id="3JBU">
    <property type="method" value="EM"/>
    <property type="resolution" value="3.64 A"/>
    <property type="chains" value="0=1-78"/>
</dbReference>
<dbReference type="PDB" id="3JBV">
    <property type="method" value="EM"/>
    <property type="resolution" value="3.32 A"/>
    <property type="chains" value="0=1-78"/>
</dbReference>
<dbReference type="PDB" id="3JCD">
    <property type="method" value="EM"/>
    <property type="resolution" value="3.70 A"/>
    <property type="chains" value="X=1-78"/>
</dbReference>
<dbReference type="PDB" id="3JCE">
    <property type="method" value="EM"/>
    <property type="resolution" value="3.20 A"/>
    <property type="chains" value="X=1-78"/>
</dbReference>
<dbReference type="PDB" id="3JCJ">
    <property type="method" value="EM"/>
    <property type="resolution" value="3.70 A"/>
    <property type="chains" value="W=1-78"/>
</dbReference>
<dbReference type="PDB" id="3JCN">
    <property type="method" value="EM"/>
    <property type="resolution" value="4.60 A"/>
    <property type="chains" value="X=1-78"/>
</dbReference>
<dbReference type="PDB" id="4CSU">
    <property type="method" value="EM"/>
    <property type="resolution" value="5.50 A"/>
    <property type="chains" value="0=2-78"/>
</dbReference>
<dbReference type="PDB" id="4U1U">
    <property type="method" value="X-ray"/>
    <property type="resolution" value="2.95 A"/>
    <property type="chains" value="BX/DX=2-78"/>
</dbReference>
<dbReference type="PDB" id="4U1V">
    <property type="method" value="X-ray"/>
    <property type="resolution" value="3.00 A"/>
    <property type="chains" value="BX/DX=2-78"/>
</dbReference>
<dbReference type="PDB" id="4U20">
    <property type="method" value="X-ray"/>
    <property type="resolution" value="2.90 A"/>
    <property type="chains" value="BX/DX=2-78"/>
</dbReference>
<dbReference type="PDB" id="4U24">
    <property type="method" value="X-ray"/>
    <property type="resolution" value="2.90 A"/>
    <property type="chains" value="BX/DX=2-78"/>
</dbReference>
<dbReference type="PDB" id="4U25">
    <property type="method" value="X-ray"/>
    <property type="resolution" value="2.90 A"/>
    <property type="chains" value="BX/DX=2-78"/>
</dbReference>
<dbReference type="PDB" id="4U26">
    <property type="method" value="X-ray"/>
    <property type="resolution" value="2.80 A"/>
    <property type="chains" value="BX/DX=2-78"/>
</dbReference>
<dbReference type="PDB" id="4U27">
    <property type="method" value="X-ray"/>
    <property type="resolution" value="2.80 A"/>
    <property type="chains" value="BX/DX=2-78"/>
</dbReference>
<dbReference type="PDB" id="4UY8">
    <property type="method" value="EM"/>
    <property type="resolution" value="3.80 A"/>
    <property type="chains" value="X=2-78"/>
</dbReference>
<dbReference type="PDB" id="4V50">
    <property type="method" value="X-ray"/>
    <property type="resolution" value="3.22 A"/>
    <property type="chains" value="BX/DX=2-78"/>
</dbReference>
<dbReference type="PDB" id="4V52">
    <property type="method" value="X-ray"/>
    <property type="resolution" value="3.21 A"/>
    <property type="chains" value="BZ/DZ=1-78"/>
</dbReference>
<dbReference type="PDB" id="4V53">
    <property type="method" value="X-ray"/>
    <property type="resolution" value="3.54 A"/>
    <property type="chains" value="BZ/DZ=1-78"/>
</dbReference>
<dbReference type="PDB" id="4V54">
    <property type="method" value="X-ray"/>
    <property type="resolution" value="3.30 A"/>
    <property type="chains" value="BZ/DZ=1-78"/>
</dbReference>
<dbReference type="PDB" id="4V55">
    <property type="method" value="X-ray"/>
    <property type="resolution" value="4.00 A"/>
    <property type="chains" value="BZ/DZ=1-78"/>
</dbReference>
<dbReference type="PDB" id="4V56">
    <property type="method" value="X-ray"/>
    <property type="resolution" value="3.93 A"/>
    <property type="chains" value="BZ/DZ=1-78"/>
</dbReference>
<dbReference type="PDB" id="4V57">
    <property type="method" value="X-ray"/>
    <property type="resolution" value="3.50 A"/>
    <property type="chains" value="BZ/DZ=1-78"/>
</dbReference>
<dbReference type="PDB" id="4V5H">
    <property type="method" value="EM"/>
    <property type="resolution" value="5.80 A"/>
    <property type="chains" value="B0=2-78"/>
</dbReference>
<dbReference type="PDB" id="4V5Y">
    <property type="method" value="X-ray"/>
    <property type="resolution" value="4.45 A"/>
    <property type="chains" value="BZ/DZ=1-78"/>
</dbReference>
<dbReference type="PDB" id="4V64">
    <property type="method" value="X-ray"/>
    <property type="resolution" value="3.50 A"/>
    <property type="chains" value="BZ/DZ=1-78"/>
</dbReference>
<dbReference type="PDB" id="4V69">
    <property type="method" value="EM"/>
    <property type="resolution" value="6.70 A"/>
    <property type="chains" value="BX=2-78"/>
</dbReference>
<dbReference type="PDB" id="4V6C">
    <property type="method" value="X-ray"/>
    <property type="resolution" value="3.19 A"/>
    <property type="chains" value="BX/DX=1-78"/>
</dbReference>
<dbReference type="PDB" id="4V6D">
    <property type="method" value="X-ray"/>
    <property type="resolution" value="3.81 A"/>
    <property type="chains" value="BX/DX=1-78"/>
</dbReference>
<dbReference type="PDB" id="4V6E">
    <property type="method" value="X-ray"/>
    <property type="resolution" value="3.71 A"/>
    <property type="chains" value="BX/DX=1-78"/>
</dbReference>
<dbReference type="PDB" id="4V6K">
    <property type="method" value="EM"/>
    <property type="resolution" value="8.25 A"/>
    <property type="chains" value="AY=1-78"/>
</dbReference>
<dbReference type="PDB" id="4V6L">
    <property type="method" value="EM"/>
    <property type="resolution" value="13.20 A"/>
    <property type="chains" value="BY=1-78"/>
</dbReference>
<dbReference type="PDB" id="4V6M">
    <property type="method" value="EM"/>
    <property type="resolution" value="7.10 A"/>
    <property type="chains" value="BX=2-78"/>
</dbReference>
<dbReference type="PDB" id="4V6N">
    <property type="method" value="EM"/>
    <property type="resolution" value="12.10 A"/>
    <property type="chains" value="AZ=2-78"/>
</dbReference>
<dbReference type="PDB" id="4V6O">
    <property type="method" value="EM"/>
    <property type="resolution" value="14.70 A"/>
    <property type="chains" value="BZ=2-78"/>
</dbReference>
<dbReference type="PDB" id="4V6P">
    <property type="method" value="EM"/>
    <property type="resolution" value="13.50 A"/>
    <property type="chains" value="BZ=2-78"/>
</dbReference>
<dbReference type="PDB" id="4V6Q">
    <property type="method" value="EM"/>
    <property type="resolution" value="11.50 A"/>
    <property type="chains" value="BZ=2-78"/>
</dbReference>
<dbReference type="PDB" id="4V6R">
    <property type="method" value="EM"/>
    <property type="resolution" value="11.50 A"/>
    <property type="chains" value="BZ=2-78"/>
</dbReference>
<dbReference type="PDB" id="4V6S">
    <property type="method" value="EM"/>
    <property type="resolution" value="13.10 A"/>
    <property type="chains" value="AZ=2-78"/>
</dbReference>
<dbReference type="PDB" id="4V6T">
    <property type="method" value="EM"/>
    <property type="resolution" value="8.30 A"/>
    <property type="chains" value="BX=2-78"/>
</dbReference>
<dbReference type="PDB" id="4V6V">
    <property type="method" value="EM"/>
    <property type="resolution" value="9.80 A"/>
    <property type="chains" value="B1=2-78"/>
</dbReference>
<dbReference type="PDB" id="4V6Y">
    <property type="method" value="EM"/>
    <property type="resolution" value="12.00 A"/>
    <property type="chains" value="BX=1-78"/>
</dbReference>
<dbReference type="PDB" id="4V6Z">
    <property type="method" value="EM"/>
    <property type="resolution" value="12.00 A"/>
    <property type="chains" value="BX=1-78"/>
</dbReference>
<dbReference type="PDB" id="4V70">
    <property type="method" value="EM"/>
    <property type="resolution" value="17.00 A"/>
    <property type="chains" value="BX=1-78"/>
</dbReference>
<dbReference type="PDB" id="4V71">
    <property type="method" value="EM"/>
    <property type="resolution" value="20.00 A"/>
    <property type="chains" value="BX=1-78"/>
</dbReference>
<dbReference type="PDB" id="4V72">
    <property type="method" value="EM"/>
    <property type="resolution" value="13.00 A"/>
    <property type="chains" value="BX=1-78"/>
</dbReference>
<dbReference type="PDB" id="4V73">
    <property type="method" value="EM"/>
    <property type="resolution" value="15.00 A"/>
    <property type="chains" value="BX=1-78"/>
</dbReference>
<dbReference type="PDB" id="4V74">
    <property type="method" value="EM"/>
    <property type="resolution" value="17.00 A"/>
    <property type="chains" value="BX=1-78"/>
</dbReference>
<dbReference type="PDB" id="4V75">
    <property type="method" value="EM"/>
    <property type="resolution" value="12.00 A"/>
    <property type="chains" value="BX=1-78"/>
</dbReference>
<dbReference type="PDB" id="4V76">
    <property type="method" value="EM"/>
    <property type="resolution" value="17.00 A"/>
    <property type="chains" value="BX=1-78"/>
</dbReference>
<dbReference type="PDB" id="4V77">
    <property type="method" value="EM"/>
    <property type="resolution" value="17.00 A"/>
    <property type="chains" value="BX=1-78"/>
</dbReference>
<dbReference type="PDB" id="4V78">
    <property type="method" value="EM"/>
    <property type="resolution" value="20.00 A"/>
    <property type="chains" value="BX=1-78"/>
</dbReference>
<dbReference type="PDB" id="4V79">
    <property type="method" value="EM"/>
    <property type="resolution" value="15.00 A"/>
    <property type="chains" value="BX=1-78"/>
</dbReference>
<dbReference type="PDB" id="4V7A">
    <property type="method" value="EM"/>
    <property type="resolution" value="9.00 A"/>
    <property type="chains" value="BX=1-78"/>
</dbReference>
<dbReference type="PDB" id="4V7B">
    <property type="method" value="EM"/>
    <property type="resolution" value="6.80 A"/>
    <property type="chains" value="BX=1-78"/>
</dbReference>
<dbReference type="PDB" id="4V7C">
    <property type="method" value="EM"/>
    <property type="resolution" value="7.60 A"/>
    <property type="chains" value="BZ=2-78"/>
</dbReference>
<dbReference type="PDB" id="4V7D">
    <property type="method" value="EM"/>
    <property type="resolution" value="7.60 A"/>
    <property type="chains" value="A1=2-78"/>
</dbReference>
<dbReference type="PDB" id="4V7I">
    <property type="method" value="EM"/>
    <property type="resolution" value="9.60 A"/>
    <property type="chains" value="AX=1-78"/>
</dbReference>
<dbReference type="PDB" id="4V7S">
    <property type="method" value="X-ray"/>
    <property type="resolution" value="3.25 A"/>
    <property type="chains" value="BX/DX=2-78"/>
</dbReference>
<dbReference type="PDB" id="4V7T">
    <property type="method" value="X-ray"/>
    <property type="resolution" value="3.19 A"/>
    <property type="chains" value="BX/DX=2-78"/>
</dbReference>
<dbReference type="PDB" id="4V7U">
    <property type="method" value="X-ray"/>
    <property type="resolution" value="3.10 A"/>
    <property type="chains" value="BX/DX=2-78"/>
</dbReference>
<dbReference type="PDB" id="4V7V">
    <property type="method" value="X-ray"/>
    <property type="resolution" value="3.29 A"/>
    <property type="chains" value="BX/DX=2-78"/>
</dbReference>
<dbReference type="PDB" id="4V85">
    <property type="method" value="X-ray"/>
    <property type="resolution" value="3.20 A"/>
    <property type="chains" value="B1=1-78"/>
</dbReference>
<dbReference type="PDB" id="4V89">
    <property type="method" value="X-ray"/>
    <property type="resolution" value="3.70 A"/>
    <property type="chains" value="B1=1-78"/>
</dbReference>
<dbReference type="PDB" id="4V9C">
    <property type="method" value="X-ray"/>
    <property type="resolution" value="3.30 A"/>
    <property type="chains" value="BX/DX=1-78"/>
</dbReference>
<dbReference type="PDB" id="4V9D">
    <property type="method" value="X-ray"/>
    <property type="resolution" value="3.00 A"/>
    <property type="chains" value="CX/DX=2-78"/>
</dbReference>
<dbReference type="PDB" id="4V9O">
    <property type="method" value="X-ray"/>
    <property type="resolution" value="2.90 A"/>
    <property type="chains" value="AX/CX/EX/GX=1-78"/>
</dbReference>
<dbReference type="PDB" id="4V9P">
    <property type="method" value="X-ray"/>
    <property type="resolution" value="2.90 A"/>
    <property type="chains" value="AX/CX/EX/GX=1-78"/>
</dbReference>
<dbReference type="PDB" id="4WF1">
    <property type="method" value="X-ray"/>
    <property type="resolution" value="3.09 A"/>
    <property type="chains" value="BX/DX=2-78"/>
</dbReference>
<dbReference type="PDB" id="4WOI">
    <property type="method" value="X-ray"/>
    <property type="resolution" value="3.00 A"/>
    <property type="chains" value="BX/CX=1-78"/>
</dbReference>
<dbReference type="PDB" id="4WWW">
    <property type="method" value="X-ray"/>
    <property type="resolution" value="3.10 A"/>
    <property type="chains" value="RX/YX=2-78"/>
</dbReference>
<dbReference type="PDB" id="4YBB">
    <property type="method" value="X-ray"/>
    <property type="resolution" value="2.10 A"/>
    <property type="chains" value="CY/DY=2-78"/>
</dbReference>
<dbReference type="PDB" id="5ADY">
    <property type="method" value="EM"/>
    <property type="resolution" value="4.50 A"/>
    <property type="chains" value="X=1-78"/>
</dbReference>
<dbReference type="PDB" id="5AFI">
    <property type="method" value="EM"/>
    <property type="resolution" value="2.90 A"/>
    <property type="chains" value="X=1-78"/>
</dbReference>
<dbReference type="PDB" id="5GAD">
    <property type="method" value="EM"/>
    <property type="resolution" value="3.70 A"/>
    <property type="chains" value="Y=1-78"/>
</dbReference>
<dbReference type="PDB" id="5GAE">
    <property type="method" value="EM"/>
    <property type="resolution" value="3.33 A"/>
    <property type="chains" value="Y=1-78"/>
</dbReference>
<dbReference type="PDB" id="5GAF">
    <property type="method" value="EM"/>
    <property type="resolution" value="4.30 A"/>
    <property type="chains" value="Y=2-78"/>
</dbReference>
<dbReference type="PDB" id="5GAG">
    <property type="method" value="EM"/>
    <property type="resolution" value="3.80 A"/>
    <property type="chains" value="Y=1-78"/>
</dbReference>
<dbReference type="PDB" id="5GAH">
    <property type="method" value="EM"/>
    <property type="resolution" value="3.80 A"/>
    <property type="chains" value="Y=1-78"/>
</dbReference>
<dbReference type="PDB" id="5H5U">
    <property type="method" value="EM"/>
    <property type="resolution" value="3.00 A"/>
    <property type="chains" value="Y=2-78"/>
</dbReference>
<dbReference type="PDB" id="5IQR">
    <property type="method" value="EM"/>
    <property type="resolution" value="3.00 A"/>
    <property type="chains" value="X=1-78"/>
</dbReference>
<dbReference type="PDB" id="5IT8">
    <property type="method" value="X-ray"/>
    <property type="resolution" value="3.12 A"/>
    <property type="chains" value="CY/DY=2-78"/>
</dbReference>
<dbReference type="PDB" id="5J5B">
    <property type="method" value="X-ray"/>
    <property type="resolution" value="2.80 A"/>
    <property type="chains" value="CY/DY=2-78"/>
</dbReference>
<dbReference type="PDB" id="5J7L">
    <property type="method" value="X-ray"/>
    <property type="resolution" value="3.00 A"/>
    <property type="chains" value="CY/DY=2-78"/>
</dbReference>
<dbReference type="PDB" id="5J88">
    <property type="method" value="X-ray"/>
    <property type="resolution" value="3.32 A"/>
    <property type="chains" value="CY/DY=2-78"/>
</dbReference>
<dbReference type="PDB" id="5J8A">
    <property type="method" value="X-ray"/>
    <property type="resolution" value="3.10 A"/>
    <property type="chains" value="CY/DY=2-78"/>
</dbReference>
<dbReference type="PDB" id="5J91">
    <property type="method" value="X-ray"/>
    <property type="resolution" value="2.96 A"/>
    <property type="chains" value="CY/DY=2-78"/>
</dbReference>
<dbReference type="PDB" id="5JC9">
    <property type="method" value="X-ray"/>
    <property type="resolution" value="3.03 A"/>
    <property type="chains" value="CY/DY=2-78"/>
</dbReference>
<dbReference type="PDB" id="5JTE">
    <property type="method" value="EM"/>
    <property type="resolution" value="3.60 A"/>
    <property type="chains" value="BX=1-78"/>
</dbReference>
<dbReference type="PDB" id="5JU8">
    <property type="method" value="EM"/>
    <property type="resolution" value="3.60 A"/>
    <property type="chains" value="BX=1-78"/>
</dbReference>
<dbReference type="PDB" id="5KCR">
    <property type="method" value="EM"/>
    <property type="resolution" value="3.60 A"/>
    <property type="chains" value="11=1-78"/>
</dbReference>
<dbReference type="PDB" id="5KCS">
    <property type="method" value="EM"/>
    <property type="resolution" value="3.90 A"/>
    <property type="chains" value="11=1-78"/>
</dbReference>
<dbReference type="PDB" id="5KPS">
    <property type="method" value="EM"/>
    <property type="resolution" value="3.90 A"/>
    <property type="chains" value="X=1-78"/>
</dbReference>
<dbReference type="PDB" id="5KPV">
    <property type="method" value="EM"/>
    <property type="resolution" value="4.10 A"/>
    <property type="chains" value="W=1-78"/>
</dbReference>
<dbReference type="PDB" id="5KPW">
    <property type="method" value="EM"/>
    <property type="resolution" value="3.90 A"/>
    <property type="chains" value="W=1-78"/>
</dbReference>
<dbReference type="PDB" id="5KPX">
    <property type="method" value="EM"/>
    <property type="resolution" value="3.90 A"/>
    <property type="chains" value="W=1-78"/>
</dbReference>
<dbReference type="PDB" id="5L3P">
    <property type="method" value="EM"/>
    <property type="resolution" value="3.70 A"/>
    <property type="chains" value="1=1-78"/>
</dbReference>
<dbReference type="PDB" id="5LZA">
    <property type="method" value="EM"/>
    <property type="resolution" value="3.60 A"/>
    <property type="chains" value="X=2-78"/>
</dbReference>
<dbReference type="PDB" id="5LZB">
    <property type="method" value="EM"/>
    <property type="resolution" value="5.30 A"/>
    <property type="chains" value="X=2-78"/>
</dbReference>
<dbReference type="PDB" id="5LZC">
    <property type="method" value="EM"/>
    <property type="resolution" value="4.80 A"/>
    <property type="chains" value="X=2-78"/>
</dbReference>
<dbReference type="PDB" id="5LZD">
    <property type="method" value="EM"/>
    <property type="resolution" value="3.40 A"/>
    <property type="chains" value="X=2-78"/>
</dbReference>
<dbReference type="PDB" id="5LZE">
    <property type="method" value="EM"/>
    <property type="resolution" value="3.50 A"/>
    <property type="chains" value="X=2-78"/>
</dbReference>
<dbReference type="PDB" id="5LZF">
    <property type="method" value="EM"/>
    <property type="resolution" value="4.60 A"/>
    <property type="chains" value="X=2-78"/>
</dbReference>
<dbReference type="PDB" id="5MDV">
    <property type="method" value="EM"/>
    <property type="resolution" value="2.97 A"/>
    <property type="chains" value="X=1-78"/>
</dbReference>
<dbReference type="PDB" id="5MDW">
    <property type="method" value="EM"/>
    <property type="resolution" value="3.06 A"/>
    <property type="chains" value="X=1-78"/>
</dbReference>
<dbReference type="PDB" id="5MDY">
    <property type="method" value="EM"/>
    <property type="resolution" value="3.35 A"/>
    <property type="chains" value="X=1-78"/>
</dbReference>
<dbReference type="PDB" id="5MDZ">
    <property type="method" value="EM"/>
    <property type="resolution" value="3.10 A"/>
    <property type="chains" value="X=1-78"/>
</dbReference>
<dbReference type="PDB" id="5MGP">
    <property type="method" value="EM"/>
    <property type="resolution" value="3.10 A"/>
    <property type="chains" value="X=2-78"/>
</dbReference>
<dbReference type="PDB" id="5NCO">
    <property type="method" value="EM"/>
    <property type="resolution" value="4.80 A"/>
    <property type="chains" value="Y=2-78"/>
</dbReference>
<dbReference type="PDB" id="5NP6">
    <property type="method" value="EM"/>
    <property type="resolution" value="3.60 A"/>
    <property type="chains" value="v=2-78"/>
</dbReference>
<dbReference type="PDB" id="5NWY">
    <property type="method" value="EM"/>
    <property type="resolution" value="2.93 A"/>
    <property type="chains" value="k=1-78"/>
</dbReference>
<dbReference type="PDB" id="5O2R">
    <property type="method" value="EM"/>
    <property type="resolution" value="3.40 A"/>
    <property type="chains" value="X=2-78"/>
</dbReference>
<dbReference type="PDB" id="5U4I">
    <property type="method" value="EM"/>
    <property type="resolution" value="3.50 A"/>
    <property type="chains" value="Y=1-78"/>
</dbReference>
<dbReference type="PDB" id="5U9F">
    <property type="method" value="EM"/>
    <property type="resolution" value="3.20 A"/>
    <property type="chains" value="26=1-78"/>
</dbReference>
<dbReference type="PDB" id="5U9G">
    <property type="method" value="EM"/>
    <property type="resolution" value="3.20 A"/>
    <property type="chains" value="26=1-78"/>
</dbReference>
<dbReference type="PDB" id="5UYK">
    <property type="method" value="EM"/>
    <property type="resolution" value="3.90 A"/>
    <property type="chains" value="26=2-78"/>
</dbReference>
<dbReference type="PDB" id="5UYL">
    <property type="method" value="EM"/>
    <property type="resolution" value="3.60 A"/>
    <property type="chains" value="26=2-78"/>
</dbReference>
<dbReference type="PDB" id="5UYM">
    <property type="method" value="EM"/>
    <property type="resolution" value="3.20 A"/>
    <property type="chains" value="26=2-78"/>
</dbReference>
<dbReference type="PDB" id="5UYN">
    <property type="method" value="EM"/>
    <property type="resolution" value="4.00 A"/>
    <property type="chains" value="26=2-78"/>
</dbReference>
<dbReference type="PDB" id="5UYP">
    <property type="method" value="EM"/>
    <property type="resolution" value="3.90 A"/>
    <property type="chains" value="26=2-78"/>
</dbReference>
<dbReference type="PDB" id="5UYQ">
    <property type="method" value="EM"/>
    <property type="resolution" value="3.80 A"/>
    <property type="chains" value="26=2-78"/>
</dbReference>
<dbReference type="PDB" id="5WDT">
    <property type="method" value="EM"/>
    <property type="resolution" value="3.00 A"/>
    <property type="chains" value="X=2-78"/>
</dbReference>
<dbReference type="PDB" id="5WE4">
    <property type="method" value="EM"/>
    <property type="resolution" value="3.10 A"/>
    <property type="chains" value="X=2-78"/>
</dbReference>
<dbReference type="PDB" id="5WE6">
    <property type="method" value="EM"/>
    <property type="resolution" value="3.40 A"/>
    <property type="chains" value="X=2-78"/>
</dbReference>
<dbReference type="PDB" id="5WF0">
    <property type="method" value="EM"/>
    <property type="resolution" value="3.60 A"/>
    <property type="chains" value="X=2-78"/>
</dbReference>
<dbReference type="PDB" id="5WFK">
    <property type="method" value="EM"/>
    <property type="resolution" value="3.40 A"/>
    <property type="chains" value="X=2-78"/>
</dbReference>
<dbReference type="PDB" id="5WFS">
    <property type="method" value="EM"/>
    <property type="resolution" value="3.00 A"/>
    <property type="chains" value="X=2-78"/>
</dbReference>
<dbReference type="PDB" id="6BU8">
    <property type="method" value="EM"/>
    <property type="resolution" value="3.50 A"/>
    <property type="chains" value="26=2-78"/>
</dbReference>
<dbReference type="PDB" id="6BY1">
    <property type="method" value="X-ray"/>
    <property type="resolution" value="3.94 A"/>
    <property type="chains" value="CX/DX=2-78"/>
</dbReference>
<dbReference type="PDB" id="6C4I">
    <property type="method" value="EM"/>
    <property type="resolution" value="3.24 A"/>
    <property type="chains" value="Y=1-78"/>
</dbReference>
<dbReference type="PDB" id="6DNC">
    <property type="method" value="EM"/>
    <property type="resolution" value="3.70 A"/>
    <property type="chains" value="BA=1-78"/>
</dbReference>
<dbReference type="PDB" id="6ENF">
    <property type="method" value="EM"/>
    <property type="resolution" value="3.20 A"/>
    <property type="chains" value="X=2-78"/>
</dbReference>
<dbReference type="PDB" id="6ENJ">
    <property type="method" value="EM"/>
    <property type="resolution" value="3.70 A"/>
    <property type="chains" value="X=2-78"/>
</dbReference>
<dbReference type="PDB" id="6ENU">
    <property type="method" value="EM"/>
    <property type="resolution" value="3.10 A"/>
    <property type="chains" value="X=2-78"/>
</dbReference>
<dbReference type="PDB" id="6GBZ">
    <property type="method" value="EM"/>
    <property type="resolution" value="3.80 A"/>
    <property type="chains" value="X=2-78"/>
</dbReference>
<dbReference type="PDB" id="6GC0">
    <property type="method" value="EM"/>
    <property type="resolution" value="3.80 A"/>
    <property type="chains" value="X=2-78"/>
</dbReference>
<dbReference type="PDB" id="6GC4">
    <property type="method" value="EM"/>
    <property type="resolution" value="4.30 A"/>
    <property type="chains" value="X=2-78"/>
</dbReference>
<dbReference type="PDB" id="6GC8">
    <property type="method" value="EM"/>
    <property type="resolution" value="3.80 A"/>
    <property type="chains" value="X=2-78"/>
</dbReference>
<dbReference type="PDB" id="6GWT">
    <property type="method" value="EM"/>
    <property type="resolution" value="3.80 A"/>
    <property type="chains" value="X=2-78"/>
</dbReference>
<dbReference type="PDB" id="6GXM">
    <property type="method" value="EM"/>
    <property type="resolution" value="3.80 A"/>
    <property type="chains" value="X=2-78"/>
</dbReference>
<dbReference type="PDB" id="6GXN">
    <property type="method" value="EM"/>
    <property type="resolution" value="3.90 A"/>
    <property type="chains" value="X=2-78"/>
</dbReference>
<dbReference type="PDB" id="6GXO">
    <property type="method" value="EM"/>
    <property type="resolution" value="3.90 A"/>
    <property type="chains" value="X=2-78"/>
</dbReference>
<dbReference type="PDB" id="6GXP">
    <property type="method" value="EM"/>
    <property type="resolution" value="4.40 A"/>
    <property type="chains" value="X=2-78"/>
</dbReference>
<dbReference type="PDB" id="6H4N">
    <property type="method" value="EM"/>
    <property type="resolution" value="3.00 A"/>
    <property type="chains" value="X=2-78"/>
</dbReference>
<dbReference type="PDB" id="6H58">
    <property type="method" value="EM"/>
    <property type="resolution" value="7.90 A"/>
    <property type="chains" value="X/XX=2-78"/>
</dbReference>
<dbReference type="PDB" id="6HRM">
    <property type="method" value="EM"/>
    <property type="resolution" value="2.96 A"/>
    <property type="chains" value="X=2-78"/>
</dbReference>
<dbReference type="PDB" id="6I0Y">
    <property type="method" value="EM"/>
    <property type="resolution" value="3.20 A"/>
    <property type="chains" value="X=2-78"/>
</dbReference>
<dbReference type="PDB" id="6I7V">
    <property type="method" value="X-ray"/>
    <property type="resolution" value="2.90 A"/>
    <property type="chains" value="CY/DY=2-78"/>
</dbReference>
<dbReference type="PDB" id="6O9K">
    <property type="method" value="EM"/>
    <property type="resolution" value="4.00 A"/>
    <property type="chains" value="1=2-78"/>
</dbReference>
<dbReference type="PDB" id="6OFX">
    <property type="method" value="EM"/>
    <property type="resolution" value="3.30 A"/>
    <property type="chains" value="x=2-78"/>
</dbReference>
<dbReference type="PDB" id="6OG7">
    <property type="method" value="EM"/>
    <property type="resolution" value="3.30 A"/>
    <property type="chains" value="x=2-78"/>
</dbReference>
<dbReference type="PDB" id="6OGF">
    <property type="method" value="EM"/>
    <property type="resolution" value="3.90 A"/>
    <property type="chains" value="x=1-78"/>
</dbReference>
<dbReference type="PDB" id="6OGG">
    <property type="method" value="EM"/>
    <property type="resolution" value="4.20 A"/>
    <property type="chains" value="x=1-78"/>
</dbReference>
<dbReference type="PDB" id="6OGI">
    <property type="method" value="EM"/>
    <property type="resolution" value="3.40 A"/>
    <property type="chains" value="x=1-78"/>
</dbReference>
<dbReference type="PDB" id="6OM6">
    <property type="method" value="EM"/>
    <property type="resolution" value="3.10 A"/>
    <property type="chains" value="X=1-78"/>
</dbReference>
<dbReference type="PDB" id="6ORE">
    <property type="method" value="EM"/>
    <property type="resolution" value="2.90 A"/>
    <property type="chains" value="X=2-78"/>
</dbReference>
<dbReference type="PDB" id="6ORL">
    <property type="method" value="EM"/>
    <property type="resolution" value="3.50 A"/>
    <property type="chains" value="X=2-78"/>
</dbReference>
<dbReference type="PDB" id="6OSK">
    <property type="method" value="EM"/>
    <property type="resolution" value="3.60 A"/>
    <property type="chains" value="X=2-78"/>
</dbReference>
<dbReference type="PDB" id="6OSQ">
    <property type="method" value="EM"/>
    <property type="resolution" value="3.50 A"/>
    <property type="chains" value="X=2-78"/>
</dbReference>
<dbReference type="PDB" id="6OST">
    <property type="method" value="EM"/>
    <property type="resolution" value="4.20 A"/>
    <property type="chains" value="X=2-78"/>
</dbReference>
<dbReference type="PDB" id="6OT3">
    <property type="method" value="EM"/>
    <property type="resolution" value="3.90 A"/>
    <property type="chains" value="X=2-78"/>
</dbReference>
<dbReference type="PDB" id="6OUO">
    <property type="method" value="EM"/>
    <property type="resolution" value="3.70 A"/>
    <property type="chains" value="X=2-78"/>
</dbReference>
<dbReference type="PDB" id="6PJ6">
    <property type="method" value="EM"/>
    <property type="resolution" value="2.20 A"/>
    <property type="chains" value="f=2-78"/>
</dbReference>
<dbReference type="PDB" id="6Q97">
    <property type="method" value="EM"/>
    <property type="resolution" value="3.90 A"/>
    <property type="chains" value="X=2-78"/>
</dbReference>
<dbReference type="PDB" id="6Q98">
    <property type="method" value="EM"/>
    <property type="resolution" value="4.30 A"/>
    <property type="chains" value="X=1-78"/>
</dbReference>
<dbReference type="PDB" id="6Q9A">
    <property type="method" value="EM"/>
    <property type="resolution" value="3.70 A"/>
    <property type="chains" value="X=2-78"/>
</dbReference>
<dbReference type="PDB" id="6QDW">
    <property type="method" value="EM"/>
    <property type="resolution" value="2.83 A"/>
    <property type="chains" value="0=1-78"/>
</dbReference>
<dbReference type="PDB" id="6QUL">
    <property type="method" value="EM"/>
    <property type="resolution" value="3.00 A"/>
    <property type="chains" value="Y=1-78"/>
</dbReference>
<dbReference type="PDB" id="6S0K">
    <property type="method" value="EM"/>
    <property type="resolution" value="3.10 A"/>
    <property type="chains" value="Y=1-78"/>
</dbReference>
<dbReference type="PDB" id="6SZS">
    <property type="method" value="EM"/>
    <property type="resolution" value="3.06 A"/>
    <property type="chains" value="X=1-78"/>
</dbReference>
<dbReference type="PDB" id="6TBV">
    <property type="method" value="EM"/>
    <property type="resolution" value="2.70 A"/>
    <property type="chains" value="L281=1-78"/>
</dbReference>
<dbReference type="PDB" id="6TC3">
    <property type="method" value="EM"/>
    <property type="resolution" value="2.70 A"/>
    <property type="chains" value="L281=1-78"/>
</dbReference>
<dbReference type="PDB" id="6U48">
    <property type="method" value="EM"/>
    <property type="resolution" value="2.87 A"/>
    <property type="chains" value="CY=2-78"/>
</dbReference>
<dbReference type="PDB" id="6VU3">
    <property type="method" value="EM"/>
    <property type="resolution" value="3.70 A"/>
    <property type="chains" value="c=2-78"/>
</dbReference>
<dbReference type="PDB" id="6VWL">
    <property type="method" value="EM"/>
    <property type="resolution" value="3.10 A"/>
    <property type="chains" value="V=1-78"/>
</dbReference>
<dbReference type="PDB" id="6VWM">
    <property type="method" value="EM"/>
    <property type="resolution" value="3.40 A"/>
    <property type="chains" value="V=1-78"/>
</dbReference>
<dbReference type="PDB" id="6VWN">
    <property type="method" value="EM"/>
    <property type="resolution" value="3.40 A"/>
    <property type="chains" value="V=1-78"/>
</dbReference>
<dbReference type="PDB" id="6VYQ">
    <property type="method" value="EM"/>
    <property type="resolution" value="3.70 A"/>
    <property type="chains" value="c=1-78"/>
</dbReference>
<dbReference type="PDB" id="6VYR">
    <property type="method" value="EM"/>
    <property type="resolution" value="3.80 A"/>
    <property type="chains" value="c=1-78"/>
</dbReference>
<dbReference type="PDB" id="6VYS">
    <property type="method" value="EM"/>
    <property type="resolution" value="3.70 A"/>
    <property type="chains" value="c=1-78"/>
</dbReference>
<dbReference type="PDB" id="6VYT">
    <property type="method" value="EM"/>
    <property type="resolution" value="14.00 A"/>
    <property type="chains" value="c=1-78"/>
</dbReference>
<dbReference type="PDB" id="6VYU">
    <property type="method" value="EM"/>
    <property type="resolution" value="7.00 A"/>
    <property type="chains" value="c=1-78"/>
</dbReference>
<dbReference type="PDB" id="6VYW">
    <property type="method" value="EM"/>
    <property type="resolution" value="7.00 A"/>
    <property type="chains" value="c=1-78"/>
</dbReference>
<dbReference type="PDB" id="6VYX">
    <property type="method" value="EM"/>
    <property type="resolution" value="9.90 A"/>
    <property type="chains" value="c=1-78"/>
</dbReference>
<dbReference type="PDB" id="6VYY">
    <property type="method" value="EM"/>
    <property type="resolution" value="9.90 A"/>
    <property type="chains" value="c=1-78"/>
</dbReference>
<dbReference type="PDB" id="6VYZ">
    <property type="method" value="EM"/>
    <property type="resolution" value="9.90 A"/>
    <property type="chains" value="c=1-78"/>
</dbReference>
<dbReference type="PDB" id="6VZ2">
    <property type="method" value="EM"/>
    <property type="resolution" value="10.00 A"/>
    <property type="chains" value="c=1-78"/>
</dbReference>
<dbReference type="PDB" id="6VZ3">
    <property type="method" value="EM"/>
    <property type="resolution" value="8.90 A"/>
    <property type="chains" value="c=2-78"/>
</dbReference>
<dbReference type="PDB" id="6VZ5">
    <property type="method" value="EM"/>
    <property type="resolution" value="8.90 A"/>
    <property type="chains" value="c=1-78"/>
</dbReference>
<dbReference type="PDB" id="6VZ7">
    <property type="method" value="EM"/>
    <property type="resolution" value="7.00 A"/>
    <property type="chains" value="c=2-78"/>
</dbReference>
<dbReference type="PDB" id="6VZJ">
    <property type="method" value="EM"/>
    <property type="resolution" value="4.10 A"/>
    <property type="chains" value="c=1-78"/>
</dbReference>
<dbReference type="PDB" id="6WD0">
    <property type="method" value="EM"/>
    <property type="resolution" value="3.00 A"/>
    <property type="chains" value="x=2-78"/>
</dbReference>
<dbReference type="PDB" id="6WD1">
    <property type="method" value="EM"/>
    <property type="resolution" value="3.30 A"/>
    <property type="chains" value="x=2-78"/>
</dbReference>
<dbReference type="PDB" id="6WD2">
    <property type="method" value="EM"/>
    <property type="resolution" value="3.60 A"/>
    <property type="chains" value="x=2-78"/>
</dbReference>
<dbReference type="PDB" id="6WD3">
    <property type="method" value="EM"/>
    <property type="resolution" value="3.60 A"/>
    <property type="chains" value="x=2-78"/>
</dbReference>
<dbReference type="PDB" id="6WD4">
    <property type="method" value="EM"/>
    <property type="resolution" value="3.70 A"/>
    <property type="chains" value="x=2-78"/>
</dbReference>
<dbReference type="PDB" id="6WD5">
    <property type="method" value="EM"/>
    <property type="resolution" value="3.60 A"/>
    <property type="chains" value="x=2-78"/>
</dbReference>
<dbReference type="PDB" id="6WD6">
    <property type="method" value="EM"/>
    <property type="resolution" value="3.70 A"/>
    <property type="chains" value="x=2-78"/>
</dbReference>
<dbReference type="PDB" id="6WD7">
    <property type="method" value="EM"/>
    <property type="resolution" value="3.90 A"/>
    <property type="chains" value="x=2-78"/>
</dbReference>
<dbReference type="PDB" id="6WD8">
    <property type="method" value="EM"/>
    <property type="resolution" value="3.70 A"/>
    <property type="chains" value="x=2-78"/>
</dbReference>
<dbReference type="PDB" id="6WD9">
    <property type="method" value="EM"/>
    <property type="resolution" value="3.70 A"/>
    <property type="chains" value="x=2-78"/>
</dbReference>
<dbReference type="PDB" id="6WDA">
    <property type="method" value="EM"/>
    <property type="resolution" value="3.80 A"/>
    <property type="chains" value="x=2-78"/>
</dbReference>
<dbReference type="PDB" id="6WDB">
    <property type="method" value="EM"/>
    <property type="resolution" value="4.00 A"/>
    <property type="chains" value="x=2-78"/>
</dbReference>
<dbReference type="PDB" id="6WDC">
    <property type="method" value="EM"/>
    <property type="resolution" value="4.20 A"/>
    <property type="chains" value="x=2-78"/>
</dbReference>
<dbReference type="PDB" id="6WDD">
    <property type="method" value="EM"/>
    <property type="resolution" value="3.20 A"/>
    <property type="chains" value="x=2-78"/>
</dbReference>
<dbReference type="PDB" id="6WDE">
    <property type="method" value="EM"/>
    <property type="resolution" value="3.00 A"/>
    <property type="chains" value="x=2-78"/>
</dbReference>
<dbReference type="PDB" id="6WDF">
    <property type="method" value="EM"/>
    <property type="resolution" value="3.30 A"/>
    <property type="chains" value="x=2-78"/>
</dbReference>
<dbReference type="PDB" id="6WDG">
    <property type="method" value="EM"/>
    <property type="resolution" value="3.30 A"/>
    <property type="chains" value="x=2-78"/>
</dbReference>
<dbReference type="PDB" id="6WDH">
    <property type="method" value="EM"/>
    <property type="resolution" value="4.30 A"/>
    <property type="chains" value="x=2-78"/>
</dbReference>
<dbReference type="PDB" id="6WDI">
    <property type="method" value="EM"/>
    <property type="resolution" value="4.00 A"/>
    <property type="chains" value="x=2-78"/>
</dbReference>
<dbReference type="PDB" id="6WDJ">
    <property type="method" value="EM"/>
    <property type="resolution" value="3.70 A"/>
    <property type="chains" value="x=2-78"/>
</dbReference>
<dbReference type="PDB" id="6WDK">
    <property type="method" value="EM"/>
    <property type="resolution" value="3.60 A"/>
    <property type="chains" value="x=2-78"/>
</dbReference>
<dbReference type="PDB" id="6WDL">
    <property type="method" value="EM"/>
    <property type="resolution" value="3.70 A"/>
    <property type="chains" value="x=2-78"/>
</dbReference>
<dbReference type="PDB" id="6WDM">
    <property type="method" value="EM"/>
    <property type="resolution" value="3.60 A"/>
    <property type="chains" value="x=2-78"/>
</dbReference>
<dbReference type="PDB" id="6WNT">
    <property type="method" value="EM"/>
    <property type="resolution" value="3.10 A"/>
    <property type="chains" value="x=2-78"/>
</dbReference>
<dbReference type="PDB" id="6WNV">
    <property type="method" value="EM"/>
    <property type="resolution" value="3.50 A"/>
    <property type="chains" value="x=2-78"/>
</dbReference>
<dbReference type="PDB" id="6WNW">
    <property type="method" value="EM"/>
    <property type="resolution" value="3.20 A"/>
    <property type="chains" value="x=2-78"/>
</dbReference>
<dbReference type="PDB" id="6X6T">
    <property type="method" value="EM"/>
    <property type="resolution" value="3.20 A"/>
    <property type="chains" value="c=1-78"/>
</dbReference>
<dbReference type="PDB" id="6X7F">
    <property type="method" value="EM"/>
    <property type="resolution" value="3.50 A"/>
    <property type="chains" value="c=1-78"/>
</dbReference>
<dbReference type="PDB" id="6X7K">
    <property type="method" value="EM"/>
    <property type="resolution" value="3.10 A"/>
    <property type="chains" value="c=1-78"/>
</dbReference>
<dbReference type="PDB" id="6X9Q">
    <property type="method" value="EM"/>
    <property type="resolution" value="4.80 A"/>
    <property type="chains" value="c=1-78"/>
</dbReference>
<dbReference type="PDB" id="6XDQ">
    <property type="method" value="EM"/>
    <property type="resolution" value="3.70 A"/>
    <property type="chains" value="c=1-78"/>
</dbReference>
<dbReference type="PDB" id="6XDR">
    <property type="method" value="EM"/>
    <property type="resolution" value="4.70 A"/>
    <property type="chains" value="c=1-78"/>
</dbReference>
<dbReference type="PDB" id="6XGF">
    <property type="method" value="EM"/>
    <property type="resolution" value="5.00 A"/>
    <property type="chains" value="c=1-78"/>
</dbReference>
<dbReference type="PDB" id="6XII">
    <property type="method" value="EM"/>
    <property type="resolution" value="7.00 A"/>
    <property type="chains" value="c=1-78"/>
</dbReference>
<dbReference type="PDB" id="6XIJ">
    <property type="method" value="EM"/>
    <property type="resolution" value="8.00 A"/>
    <property type="chains" value="c=1-78"/>
</dbReference>
<dbReference type="PDB" id="6XZ7">
    <property type="method" value="EM"/>
    <property type="resolution" value="2.10 A"/>
    <property type="chains" value="X=2-78"/>
</dbReference>
<dbReference type="PDB" id="6XZA">
    <property type="method" value="EM"/>
    <property type="resolution" value="2.66 A"/>
    <property type="chains" value="X2=2-78"/>
</dbReference>
<dbReference type="PDB" id="6XZB">
    <property type="method" value="EM"/>
    <property type="resolution" value="2.54 A"/>
    <property type="chains" value="X2=2-78"/>
</dbReference>
<dbReference type="PDB" id="6Y69">
    <property type="method" value="EM"/>
    <property type="resolution" value="2.86 A"/>
    <property type="chains" value="X=2-78"/>
</dbReference>
<dbReference type="PDB" id="6YS3">
    <property type="method" value="EM"/>
    <property type="resolution" value="2.58 A"/>
    <property type="chains" value="0=1-78"/>
</dbReference>
<dbReference type="PDB" id="6YSR">
    <property type="method" value="EM"/>
    <property type="resolution" value="3.10 A"/>
    <property type="chains" value="X=1-78"/>
</dbReference>
<dbReference type="PDB" id="6YSS">
    <property type="method" value="EM"/>
    <property type="resolution" value="2.60 A"/>
    <property type="chains" value="X=1-78"/>
</dbReference>
<dbReference type="PDB" id="6YSU">
    <property type="method" value="EM"/>
    <property type="resolution" value="3.70 A"/>
    <property type="chains" value="X=1-78"/>
</dbReference>
<dbReference type="PDB" id="6ZTJ">
    <property type="method" value="EM"/>
    <property type="resolution" value="3.40 A"/>
    <property type="chains" value="BY=1-78"/>
</dbReference>
<dbReference type="PDB" id="6ZTL">
    <property type="method" value="EM"/>
    <property type="resolution" value="3.50 A"/>
    <property type="chains" value="BY=1-78"/>
</dbReference>
<dbReference type="PDB" id="6ZTM">
    <property type="method" value="EM"/>
    <property type="resolution" value="3.30 A"/>
    <property type="chains" value="BY=1-78"/>
</dbReference>
<dbReference type="PDB" id="6ZTN">
    <property type="method" value="EM"/>
    <property type="resolution" value="3.90 A"/>
    <property type="chains" value="BY=1-78"/>
</dbReference>
<dbReference type="PDB" id="6ZTO">
    <property type="method" value="EM"/>
    <property type="resolution" value="3.00 A"/>
    <property type="chains" value="BY=1-78"/>
</dbReference>
<dbReference type="PDB" id="6ZTP">
    <property type="method" value="EM"/>
    <property type="resolution" value="3.00 A"/>
    <property type="chains" value="BY=1-78"/>
</dbReference>
<dbReference type="PDB" id="6ZU1">
    <property type="method" value="EM"/>
    <property type="resolution" value="3.00 A"/>
    <property type="chains" value="BY=1-78"/>
</dbReference>
<dbReference type="PDB" id="7ABZ">
    <property type="method" value="EM"/>
    <property type="resolution" value="3.21 A"/>
    <property type="chains" value="X=2-78"/>
</dbReference>
<dbReference type="PDB" id="7AC7">
    <property type="method" value="EM"/>
    <property type="resolution" value="3.08 A"/>
    <property type="chains" value="X=2-78"/>
</dbReference>
<dbReference type="PDB" id="7ACJ">
    <property type="method" value="EM"/>
    <property type="resolution" value="3.20 A"/>
    <property type="chains" value="X=2-78"/>
</dbReference>
<dbReference type="PDB" id="7ACR">
    <property type="method" value="EM"/>
    <property type="resolution" value="3.44 A"/>
    <property type="chains" value="X=2-78"/>
</dbReference>
<dbReference type="PDB" id="7B5K">
    <property type="method" value="EM"/>
    <property type="resolution" value="2.90 A"/>
    <property type="chains" value="X=2-78"/>
</dbReference>
<dbReference type="PDB" id="7BL2">
    <property type="method" value="EM"/>
    <property type="resolution" value="3.70 A"/>
    <property type="chains" value="X=1-78"/>
</dbReference>
<dbReference type="PDB" id="7BL3">
    <property type="method" value="EM"/>
    <property type="resolution" value="3.50 A"/>
    <property type="chains" value="X=1-78"/>
</dbReference>
<dbReference type="PDB" id="7BL4">
    <property type="method" value="EM"/>
    <property type="resolution" value="2.40 A"/>
    <property type="chains" value="X=1-78"/>
</dbReference>
<dbReference type="PDB" id="7BL5">
    <property type="method" value="EM"/>
    <property type="resolution" value="3.30 A"/>
    <property type="chains" value="X=1-78"/>
</dbReference>
<dbReference type="PDB" id="7BL6">
    <property type="method" value="EM"/>
    <property type="resolution" value="4.00 A"/>
    <property type="chains" value="X=1-78"/>
</dbReference>
<dbReference type="PDB" id="7BV8">
    <property type="method" value="EM"/>
    <property type="resolution" value="3.14 A"/>
    <property type="chains" value="Y=1-78"/>
</dbReference>
<dbReference type="PDB" id="7D6Z">
    <property type="method" value="EM"/>
    <property type="resolution" value="3.40 A"/>
    <property type="chains" value="X=1-78"/>
</dbReference>
<dbReference type="PDB" id="7D80">
    <property type="method" value="EM"/>
    <property type="resolution" value="4.10 A"/>
    <property type="chains" value="v=1-78"/>
</dbReference>
<dbReference type="PDB" id="7JSS">
    <property type="method" value="EM"/>
    <property type="resolution" value="3.70 A"/>
    <property type="chains" value="x=2-78"/>
</dbReference>
<dbReference type="PDB" id="7JSW">
    <property type="method" value="EM"/>
    <property type="resolution" value="3.80 A"/>
    <property type="chains" value="x=2-78"/>
</dbReference>
<dbReference type="PDB" id="7JSZ">
    <property type="method" value="EM"/>
    <property type="resolution" value="3.70 A"/>
    <property type="chains" value="x=2-78"/>
</dbReference>
<dbReference type="PDB" id="7JT1">
    <property type="method" value="EM"/>
    <property type="resolution" value="3.30 A"/>
    <property type="chains" value="x=2-78"/>
</dbReference>
<dbReference type="PDB" id="7JT2">
    <property type="method" value="EM"/>
    <property type="resolution" value="3.50 A"/>
    <property type="chains" value="x=2-78"/>
</dbReference>
<dbReference type="PDB" id="7JT3">
    <property type="method" value="EM"/>
    <property type="resolution" value="3.70 A"/>
    <property type="chains" value="x=2-78"/>
</dbReference>
<dbReference type="PDB" id="7K00">
    <property type="method" value="EM"/>
    <property type="resolution" value="1.98 A"/>
    <property type="chains" value="w=1-78"/>
</dbReference>
<dbReference type="PDB" id="7K50">
    <property type="method" value="EM"/>
    <property type="resolution" value="3.40 A"/>
    <property type="chains" value="x=2-78"/>
</dbReference>
<dbReference type="PDB" id="7K51">
    <property type="method" value="EM"/>
    <property type="resolution" value="3.50 A"/>
    <property type="chains" value="x=2-78"/>
</dbReference>
<dbReference type="PDB" id="7K52">
    <property type="method" value="EM"/>
    <property type="resolution" value="3.40 A"/>
    <property type="chains" value="x=2-78"/>
</dbReference>
<dbReference type="PDB" id="7K53">
    <property type="method" value="EM"/>
    <property type="resolution" value="3.20 A"/>
    <property type="chains" value="x=2-78"/>
</dbReference>
<dbReference type="PDB" id="7K54">
    <property type="method" value="EM"/>
    <property type="resolution" value="3.20 A"/>
    <property type="chains" value="x=2-78"/>
</dbReference>
<dbReference type="PDB" id="7K55">
    <property type="method" value="EM"/>
    <property type="resolution" value="3.30 A"/>
    <property type="chains" value="x=2-78"/>
</dbReference>
<dbReference type="PDB" id="7LV0">
    <property type="method" value="EM"/>
    <property type="resolution" value="3.20 A"/>
    <property type="chains" value="x=2-78"/>
</dbReference>
<dbReference type="PDB" id="7LVK">
    <property type="method" value="EM"/>
    <property type="resolution" value="2.20 A"/>
    <property type="chains" value="f=1-78"/>
</dbReference>
<dbReference type="PDB" id="7M5D">
    <property type="method" value="EM"/>
    <property type="resolution" value="2.80 A"/>
    <property type="chains" value="X=2-78"/>
</dbReference>
<dbReference type="PDB" id="7N1P">
    <property type="method" value="EM"/>
    <property type="resolution" value="2.33 A"/>
    <property type="chains" value="Lb=1-78"/>
</dbReference>
<dbReference type="PDB" id="7N2C">
    <property type="method" value="EM"/>
    <property type="resolution" value="2.72 A"/>
    <property type="chains" value="Lb=1-78"/>
</dbReference>
<dbReference type="PDB" id="7N2U">
    <property type="method" value="EM"/>
    <property type="resolution" value="2.53 A"/>
    <property type="chains" value="Lb=1-78"/>
</dbReference>
<dbReference type="PDB" id="7N2V">
    <property type="method" value="EM"/>
    <property type="resolution" value="2.54 A"/>
    <property type="chains" value="Lb=1-78"/>
</dbReference>
<dbReference type="PDB" id="7N30">
    <property type="method" value="EM"/>
    <property type="resolution" value="2.66 A"/>
    <property type="chains" value="Lb=1-78"/>
</dbReference>
<dbReference type="PDB" id="7N31">
    <property type="method" value="EM"/>
    <property type="resolution" value="2.69 A"/>
    <property type="chains" value="Lb=1-78"/>
</dbReference>
<dbReference type="PDB" id="7NBU">
    <property type="method" value="EM"/>
    <property type="resolution" value="3.11 A"/>
    <property type="chains" value="w=2-78"/>
</dbReference>
<dbReference type="PDB" id="7NWT">
    <property type="method" value="EM"/>
    <property type="resolution" value="2.66 A"/>
    <property type="chains" value="X=1-78"/>
</dbReference>
<dbReference type="PDB" id="7O19">
    <property type="method" value="EM"/>
    <property type="resolution" value="2.90 A"/>
    <property type="chains" value="BX=1-78"/>
</dbReference>
<dbReference type="PDB" id="7O1A">
    <property type="method" value="EM"/>
    <property type="resolution" value="2.40 A"/>
    <property type="chains" value="BX=1-78"/>
</dbReference>
<dbReference type="PDB" id="7O1C">
    <property type="method" value="EM"/>
    <property type="resolution" value="2.60 A"/>
    <property type="chains" value="BX=1-78"/>
</dbReference>
<dbReference type="PDB" id="7OIZ">
    <property type="method" value="EM"/>
    <property type="resolution" value="2.90 A"/>
    <property type="chains" value="w=1-78"/>
</dbReference>
<dbReference type="PDB" id="7OJ0">
    <property type="method" value="EM"/>
    <property type="resolution" value="3.50 A"/>
    <property type="chains" value="w=1-78"/>
</dbReference>
<dbReference type="PDB" id="7P3K">
    <property type="method" value="EM"/>
    <property type="resolution" value="2.90 A"/>
    <property type="chains" value="w=1-78"/>
</dbReference>
<dbReference type="PDB" id="7PJS">
    <property type="method" value="EM"/>
    <property type="resolution" value="2.35 A"/>
    <property type="chains" value="X=1-78"/>
</dbReference>
<dbReference type="PDB" id="7PJT">
    <property type="method" value="EM"/>
    <property type="resolution" value="6.00 A"/>
    <property type="chains" value="X=1-78"/>
</dbReference>
<dbReference type="PDB" id="7PJV">
    <property type="method" value="EM"/>
    <property type="resolution" value="3.10 A"/>
    <property type="chains" value="X=1-78"/>
</dbReference>
<dbReference type="PDB" id="7PJW">
    <property type="method" value="EM"/>
    <property type="resolution" value="4.00 A"/>
    <property type="chains" value="X=1-78"/>
</dbReference>
<dbReference type="PDB" id="7PJX">
    <property type="method" value="EM"/>
    <property type="resolution" value="6.50 A"/>
    <property type="chains" value="X=1-78"/>
</dbReference>
<dbReference type="PDB" id="7PJY">
    <property type="method" value="EM"/>
    <property type="resolution" value="3.10 A"/>
    <property type="chains" value="X=1-78"/>
</dbReference>
<dbReference type="PDB" id="7PJZ">
    <property type="method" value="EM"/>
    <property type="resolution" value="6.00 A"/>
    <property type="chains" value="X=1-78"/>
</dbReference>
<dbReference type="PDB" id="7Q4K">
    <property type="method" value="EM"/>
    <property type="resolution" value="3.00 A"/>
    <property type="chains" value="BX=1-78"/>
</dbReference>
<dbReference type="PDB" id="7QG8">
    <property type="method" value="EM"/>
    <property type="resolution" value="3.97 A"/>
    <property type="chains" value="k=1-78"/>
</dbReference>
<dbReference type="PDB" id="7QGH">
    <property type="method" value="EM"/>
    <property type="resolution" value="4.48 A"/>
    <property type="chains" value="k=1-78"/>
</dbReference>
<dbReference type="PDB" id="7QGN">
    <property type="method" value="EM"/>
    <property type="resolution" value="3.37 A"/>
    <property type="chains" value="k=1-78"/>
</dbReference>
<dbReference type="PDB" id="7QGR">
    <property type="method" value="EM"/>
    <property type="resolution" value="5.70 A"/>
    <property type="chains" value="k=1-78"/>
</dbReference>
<dbReference type="PDB" id="7QQ3">
    <property type="method" value="EM"/>
    <property type="resolution" value="2.10 A"/>
    <property type="chains" value="f=1-78"/>
</dbReference>
<dbReference type="PDB" id="7S1G">
    <property type="method" value="EM"/>
    <property type="resolution" value="2.48 A"/>
    <property type="chains" value="f=1-78"/>
</dbReference>
<dbReference type="PDB" id="7S1H">
    <property type="method" value="EM"/>
    <property type="resolution" value="2.35 A"/>
    <property type="chains" value="f=1-78"/>
</dbReference>
<dbReference type="PDB" id="7S1I">
    <property type="method" value="EM"/>
    <property type="resolution" value="2.48 A"/>
    <property type="chains" value="f=1-78"/>
</dbReference>
<dbReference type="PDB" id="7S1J">
    <property type="method" value="EM"/>
    <property type="resolution" value="2.47 A"/>
    <property type="chains" value="f=1-78"/>
</dbReference>
<dbReference type="PDB" id="7S1K">
    <property type="method" value="EM"/>
    <property type="resolution" value="2.42 A"/>
    <property type="chains" value="f=1-78"/>
</dbReference>
<dbReference type="PDB" id="7SA4">
    <property type="method" value="EM"/>
    <property type="resolution" value="2.55 A"/>
    <property type="chains" value="X=1-78"/>
</dbReference>
<dbReference type="PDB" id="7SS9">
    <property type="method" value="EM"/>
    <property type="resolution" value="3.90 A"/>
    <property type="chains" value="x=2-78"/>
</dbReference>
<dbReference type="PDB" id="7SSD">
    <property type="method" value="EM"/>
    <property type="resolution" value="3.30 A"/>
    <property type="chains" value="x=2-78"/>
</dbReference>
<dbReference type="PDB" id="7SSL">
    <property type="method" value="EM"/>
    <property type="resolution" value="3.80 A"/>
    <property type="chains" value="x=2-78"/>
</dbReference>
<dbReference type="PDB" id="7SSN">
    <property type="method" value="EM"/>
    <property type="resolution" value="3.20 A"/>
    <property type="chains" value="x=2-78"/>
</dbReference>
<dbReference type="PDB" id="7SSO">
    <property type="method" value="EM"/>
    <property type="resolution" value="3.20 A"/>
    <property type="chains" value="x=2-78"/>
</dbReference>
<dbReference type="PDB" id="7SSW">
    <property type="method" value="EM"/>
    <property type="resolution" value="3.80 A"/>
    <property type="chains" value="x=2-78"/>
</dbReference>
<dbReference type="PDB" id="7ST2">
    <property type="method" value="EM"/>
    <property type="resolution" value="2.90 A"/>
    <property type="chains" value="x=2-78"/>
</dbReference>
<dbReference type="PDB" id="7ST6">
    <property type="method" value="EM"/>
    <property type="resolution" value="3.00 A"/>
    <property type="chains" value="x=2-78"/>
</dbReference>
<dbReference type="PDB" id="7ST7">
    <property type="method" value="EM"/>
    <property type="resolution" value="3.20 A"/>
    <property type="chains" value="x=2-78"/>
</dbReference>
<dbReference type="PDB" id="7TOS">
    <property type="method" value="EM"/>
    <property type="resolution" value="2.90 A"/>
    <property type="chains" value="L28=2-78"/>
</dbReference>
<dbReference type="PDB" id="7UG7">
    <property type="method" value="EM"/>
    <property type="resolution" value="2.58 A"/>
    <property type="chains" value="Lb=1-78"/>
</dbReference>
<dbReference type="PDB" id="7UPH">
    <property type="method" value="EM"/>
    <property type="resolution" value="4.18 A"/>
    <property type="chains" value="w=2-78"/>
</dbReference>
<dbReference type="PDB" id="7Y7C">
    <property type="method" value="EM"/>
    <property type="resolution" value="2.51 A"/>
    <property type="chains" value="w=1-78"/>
</dbReference>
<dbReference type="PDB" id="7Y7D">
    <property type="method" value="EM"/>
    <property type="resolution" value="2.58 A"/>
    <property type="chains" value="w=1-78"/>
</dbReference>
<dbReference type="PDB" id="7Y7E">
    <property type="method" value="EM"/>
    <property type="resolution" value="2.41 A"/>
    <property type="chains" value="w=1-78"/>
</dbReference>
<dbReference type="PDB" id="7Y7F">
    <property type="method" value="EM"/>
    <property type="resolution" value="2.43 A"/>
    <property type="chains" value="w=1-78"/>
</dbReference>
<dbReference type="PDB" id="7Y7G">
    <property type="method" value="EM"/>
    <property type="resolution" value="2.34 A"/>
    <property type="chains" value="w=1-78"/>
</dbReference>
<dbReference type="PDB" id="7Y7H">
    <property type="method" value="EM"/>
    <property type="resolution" value="2.51 A"/>
    <property type="chains" value="w=1-78"/>
</dbReference>
<dbReference type="PDB" id="7YLA">
    <property type="method" value="EM"/>
    <property type="resolution" value="2.52 A"/>
    <property type="chains" value="f=2-78"/>
</dbReference>
<dbReference type="PDB" id="7Z20">
    <property type="method" value="EM"/>
    <property type="resolution" value="2.29 A"/>
    <property type="chains" value="0=1-78"/>
</dbReference>
<dbReference type="PDB" id="7ZOD">
    <property type="method" value="EM"/>
    <property type="resolution" value="2.56 A"/>
    <property type="chains" value="0=1-78"/>
</dbReference>
<dbReference type="PDB" id="7ZP8">
    <property type="method" value="EM"/>
    <property type="resolution" value="2.20 A"/>
    <property type="chains" value="0=1-78"/>
</dbReference>
<dbReference type="PDB" id="7ZQ5">
    <property type="method" value="EM"/>
    <property type="resolution" value="2.70 A"/>
    <property type="chains" value="0=1-78"/>
</dbReference>
<dbReference type="PDB" id="7ZQ6">
    <property type="method" value="EM"/>
    <property type="resolution" value="2.75 A"/>
    <property type="chains" value="0=1-78"/>
</dbReference>
<dbReference type="PDB" id="7ZTA">
    <property type="method" value="EM"/>
    <property type="resolution" value="2.70 A"/>
    <property type="chains" value="L281=2-78"/>
</dbReference>
<dbReference type="PDB" id="8A3L">
    <property type="method" value="EM"/>
    <property type="resolution" value="3.42 A"/>
    <property type="chains" value="w=1-78"/>
</dbReference>
<dbReference type="PDB" id="8AKN">
    <property type="method" value="EM"/>
    <property type="resolution" value="2.30 A"/>
    <property type="chains" value="w=1-78"/>
</dbReference>
<dbReference type="PDB" id="8AM9">
    <property type="method" value="EM"/>
    <property type="resolution" value="2.80 A"/>
    <property type="chains" value="w=1-78"/>
</dbReference>
<dbReference type="PDB" id="8ANA">
    <property type="method" value="EM"/>
    <property type="resolution" value="2.10 A"/>
    <property type="chains" value="w=1-78"/>
</dbReference>
<dbReference type="PDB" id="8AP4">
    <property type="method" value="EM"/>
    <property type="resolution" value="3.00 A"/>
    <property type="chains" value="w=1-78"/>
</dbReference>
<dbReference type="PDB" id="8AYE">
    <property type="method" value="EM"/>
    <property type="resolution" value="1.96 A"/>
    <property type="chains" value="w=1-78"/>
</dbReference>
<dbReference type="PDB" id="8B0X">
    <property type="method" value="EM"/>
    <property type="resolution" value="1.55 A"/>
    <property type="chains" value="w=1-78"/>
</dbReference>
<dbReference type="PDB" id="8B7Y">
    <property type="method" value="EM"/>
    <property type="resolution" value="3.00 A"/>
    <property type="chains" value="f=1-78"/>
</dbReference>
<dbReference type="PDB" id="8BF7">
    <property type="method" value="EM"/>
    <property type="resolution" value="2.33 A"/>
    <property type="chains" value="U=1-78"/>
</dbReference>
<dbReference type="PDB" id="8BGE">
    <property type="method" value="EM"/>
    <property type="resolution" value="2.11 A"/>
    <property type="chains" value="U=1-78"/>
</dbReference>
<dbReference type="PDB" id="8BGH">
    <property type="method" value="EM"/>
    <property type="resolution" value="2.88 A"/>
    <property type="chains" value="U=1-78"/>
</dbReference>
<dbReference type="PDB" id="8BH4">
    <property type="method" value="EM"/>
    <property type="resolution" value="2.62 A"/>
    <property type="chains" value="U=1-78"/>
</dbReference>
<dbReference type="PDB" id="8BHJ">
    <property type="method" value="EM"/>
    <property type="resolution" value="2.81 A"/>
    <property type="chains" value="U=1-78"/>
</dbReference>
<dbReference type="PDB" id="8BHL">
    <property type="method" value="EM"/>
    <property type="resolution" value="2.21 A"/>
    <property type="chains" value="U=1-78"/>
</dbReference>
<dbReference type="PDB" id="8BHN">
    <property type="method" value="EM"/>
    <property type="resolution" value="2.85 A"/>
    <property type="chains" value="U=1-78"/>
</dbReference>
<dbReference type="PDB" id="8BHP">
    <property type="method" value="EM"/>
    <property type="resolution" value="2.37 A"/>
    <property type="chains" value="U=1-78"/>
</dbReference>
<dbReference type="PDB" id="8BIL">
    <property type="method" value="EM"/>
    <property type="resolution" value="2.04 A"/>
    <property type="chains" value="U=1-78"/>
</dbReference>
<dbReference type="PDB" id="8BIM">
    <property type="method" value="EM"/>
    <property type="resolution" value="2.04 A"/>
    <property type="chains" value="U=1-78"/>
</dbReference>
<dbReference type="PDB" id="8C8X">
    <property type="method" value="EM"/>
    <property type="resolution" value="3.93 A"/>
    <property type="chains" value="X=1-78"/>
</dbReference>
<dbReference type="PDB" id="8C8Y">
    <property type="method" value="EM"/>
    <property type="resolution" value="3.03 A"/>
    <property type="chains" value="X=1-78"/>
</dbReference>
<dbReference type="PDB" id="8C8Z">
    <property type="method" value="EM"/>
    <property type="resolution" value="3.12 A"/>
    <property type="chains" value="X=1-78"/>
</dbReference>
<dbReference type="PDB" id="8CAM">
    <property type="method" value="EM"/>
    <property type="resolution" value="1.86 A"/>
    <property type="chains" value="w=1-78"/>
</dbReference>
<dbReference type="PDB" id="8CEU">
    <property type="method" value="EM"/>
    <property type="resolution" value="1.83 A"/>
    <property type="chains" value="w=1-78"/>
</dbReference>
<dbReference type="PDB" id="8CGD">
    <property type="method" value="EM"/>
    <property type="resolution" value="1.98 A"/>
    <property type="chains" value="w=1-78"/>
</dbReference>
<dbReference type="PDB" id="8CGK">
    <property type="method" value="EM"/>
    <property type="resolution" value="1.64 A"/>
    <property type="chains" value="w=1-78"/>
</dbReference>
<dbReference type="PDB" id="8CGV">
    <property type="method" value="EM"/>
    <property type="resolution" value="1.66 A"/>
    <property type="chains" value="w=1-78"/>
</dbReference>
<dbReference type="PDB" id="8EIU">
    <property type="method" value="EM"/>
    <property type="resolution" value="2.24 A"/>
    <property type="chains" value="w=1-78"/>
</dbReference>
<dbReference type="PDB" id="8EKC">
    <property type="method" value="EM"/>
    <property type="resolution" value="2.70 A"/>
    <property type="chains" value="Z=1-78"/>
</dbReference>
<dbReference type="PDB" id="8EMM">
    <property type="method" value="EM"/>
    <property type="resolution" value="2.10 A"/>
    <property type="chains" value="w=1-78"/>
</dbReference>
<dbReference type="PDB" id="8FIZ">
    <property type="method" value="EM"/>
    <property type="resolution" value="3.80 A"/>
    <property type="chains" value="DE=1-78"/>
</dbReference>
<dbReference type="PDB" id="8FTO">
    <property type="method" value="EM"/>
    <property type="resolution" value="1.85 A"/>
    <property type="chains" value="w=1-78"/>
</dbReference>
<dbReference type="PDB" id="8FZD">
    <property type="method" value="EM"/>
    <property type="resolution" value="3.10 A"/>
    <property type="chains" value="Z=1-78"/>
</dbReference>
<dbReference type="PDB" id="8FZE">
    <property type="method" value="EM"/>
    <property type="resolution" value="3.00 A"/>
    <property type="chains" value="Z=1-78"/>
</dbReference>
<dbReference type="PDB" id="8FZF">
    <property type="method" value="EM"/>
    <property type="resolution" value="3.20 A"/>
    <property type="chains" value="Z=1-78"/>
</dbReference>
<dbReference type="PDB" id="8FZG">
    <property type="method" value="EM"/>
    <property type="resolution" value="3.10 A"/>
    <property type="chains" value="Z=1-78"/>
</dbReference>
<dbReference type="PDB" id="8FZH">
    <property type="method" value="EM"/>
    <property type="resolution" value="2.90 A"/>
    <property type="chains" value="Z=1-78"/>
</dbReference>
<dbReference type="PDB" id="8FZI">
    <property type="method" value="EM"/>
    <property type="resolution" value="3.10 A"/>
    <property type="chains" value="Z=1-78"/>
</dbReference>
<dbReference type="PDB" id="8FZJ">
    <property type="method" value="EM"/>
    <property type="resolution" value="3.00 A"/>
    <property type="chains" value="Z=1-78"/>
</dbReference>
<dbReference type="PDB" id="8G2U">
    <property type="method" value="EM"/>
    <property type="resolution" value="3.00 A"/>
    <property type="chains" value="X=2-78"/>
</dbReference>
<dbReference type="PDB" id="8G31">
    <property type="method" value="EM"/>
    <property type="resolution" value="3.20 A"/>
    <property type="chains" value="X=2-78"/>
</dbReference>
<dbReference type="PDB" id="8G34">
    <property type="method" value="EM"/>
    <property type="resolution" value="3.20 A"/>
    <property type="chains" value="X=2-78"/>
</dbReference>
<dbReference type="PDB" id="8G38">
    <property type="method" value="EM"/>
    <property type="resolution" value="3.20 A"/>
    <property type="chains" value="X=2-78"/>
</dbReference>
<dbReference type="PDB" id="8G6W">
    <property type="method" value="EM"/>
    <property type="resolution" value="2.02 A"/>
    <property type="chains" value="w=1-78"/>
</dbReference>
<dbReference type="PDB" id="8G6X">
    <property type="method" value="EM"/>
    <property type="resolution" value="2.31 A"/>
    <property type="chains" value="w=1-78"/>
</dbReference>
<dbReference type="PDB" id="8G6Y">
    <property type="method" value="EM"/>
    <property type="resolution" value="2.09 A"/>
    <property type="chains" value="w=1-78"/>
</dbReference>
<dbReference type="PDB" id="8G7P">
    <property type="method" value="EM"/>
    <property type="resolution" value="2.90 A"/>
    <property type="chains" value="Z=1-78"/>
</dbReference>
<dbReference type="PDB" id="8G7Q">
    <property type="method" value="EM"/>
    <property type="resolution" value="3.10 A"/>
    <property type="chains" value="Z=1-78"/>
</dbReference>
<dbReference type="PDB" id="8G7R">
    <property type="method" value="EM"/>
    <property type="resolution" value="2.80 A"/>
    <property type="chains" value="Z=1-78"/>
</dbReference>
<dbReference type="PDB" id="8G7S">
    <property type="method" value="EM"/>
    <property type="resolution" value="3.10 A"/>
    <property type="chains" value="Z=1-78"/>
</dbReference>
<dbReference type="PDB" id="8HSP">
    <property type="method" value="EM"/>
    <property type="resolution" value="2.32 A"/>
    <property type="chains" value="w=1-78"/>
</dbReference>
<dbReference type="PDB" id="8HTZ">
    <property type="method" value="EM"/>
    <property type="resolution" value="2.40 A"/>
    <property type="chains" value="w=1-78"/>
</dbReference>
<dbReference type="PDB" id="8HU1">
    <property type="method" value="EM"/>
    <property type="resolution" value="2.69 A"/>
    <property type="chains" value="w=1-78"/>
</dbReference>
<dbReference type="PDB" id="8IFB">
    <property type="method" value="EM"/>
    <property type="resolution" value="2.43 A"/>
    <property type="chains" value="w=1-78"/>
</dbReference>
<dbReference type="PDB" id="8IFC">
    <property type="method" value="EM"/>
    <property type="resolution" value="2.90 A"/>
    <property type="chains" value="w=1-78"/>
</dbReference>
<dbReference type="PDB" id="8J1Z">
    <property type="method" value="EM"/>
    <property type="resolution" value="2.60 A"/>
    <property type="chains" value="w=1-78"/>
</dbReference>
<dbReference type="PDB" id="8P16">
    <property type="method" value="EM"/>
    <property type="resolution" value="2.77 A"/>
    <property type="chains" value="X=1-78"/>
</dbReference>
<dbReference type="PDB" id="8P17">
    <property type="method" value="EM"/>
    <property type="resolution" value="2.78 A"/>
    <property type="chains" value="X=1-78"/>
</dbReference>
<dbReference type="PDB" id="8P18">
    <property type="method" value="EM"/>
    <property type="resolution" value="2.77 A"/>
    <property type="chains" value="X=1-78"/>
</dbReference>
<dbReference type="PDB" id="8PEG">
    <property type="method" value="EM"/>
    <property type="resolution" value="3.30 A"/>
    <property type="chains" value="1=1-78"/>
</dbReference>
<dbReference type="PDB" id="8PHJ">
    <property type="method" value="EM"/>
    <property type="resolution" value="3.67 A"/>
    <property type="chains" value="w=1-78"/>
</dbReference>
<dbReference type="PDB" id="8PKL">
    <property type="method" value="EM"/>
    <property type="resolution" value="3.09 A"/>
    <property type="chains" value="1=1-78"/>
</dbReference>
<dbReference type="PDB" id="8PVA">
    <property type="method" value="EM"/>
    <property type="resolution" value="4.50 A"/>
    <property type="chains" value="w=1-78"/>
</dbReference>
<dbReference type="PDB" id="8Q4F">
    <property type="method" value="EM"/>
    <property type="resolution" value="3.10 A"/>
    <property type="chains" value="w=1-78"/>
</dbReference>
<dbReference type="PDB" id="8QBT">
    <property type="method" value="EM"/>
    <property type="resolution" value="2.20 A"/>
    <property type="chains" value="X=1-78"/>
</dbReference>
<dbReference type="PDB" id="8QK7">
    <property type="method" value="EM"/>
    <property type="resolution" value="2.77 A"/>
    <property type="chains" value="X=1-78"/>
</dbReference>
<dbReference type="PDB" id="8QOA">
    <property type="method" value="EM"/>
    <property type="resolution" value="2.00 A"/>
    <property type="chains" value="w=1-78"/>
</dbReference>
<dbReference type="PDB" id="8R3V">
    <property type="method" value="EM"/>
    <property type="resolution" value="3.28 A"/>
    <property type="chains" value="12=1-78"/>
</dbReference>
<dbReference type="PDB" id="8R6C">
    <property type="method" value="EM"/>
    <property type="resolution" value="2.20 A"/>
    <property type="chains" value="w=1-78"/>
</dbReference>
<dbReference type="PDB" id="8R8M">
    <property type="method" value="EM"/>
    <property type="resolution" value="2.40 A"/>
    <property type="chains" value="w=1-78"/>
</dbReference>
<dbReference type="PDB" id="8RCL">
    <property type="method" value="EM"/>
    <property type="resolution" value="3.49 A"/>
    <property type="chains" value="12=1-78"/>
</dbReference>
<dbReference type="PDB" id="8RCM">
    <property type="method" value="EM"/>
    <property type="resolution" value="3.59 A"/>
    <property type="chains" value="12=1-78"/>
</dbReference>
<dbReference type="PDB" id="8RCS">
    <property type="method" value="EM"/>
    <property type="resolution" value="4.46 A"/>
    <property type="chains" value="12=1-78"/>
</dbReference>
<dbReference type="PDB" id="8RCT">
    <property type="method" value="EM"/>
    <property type="resolution" value="5.32 A"/>
    <property type="chains" value="12=1-78"/>
</dbReference>
<dbReference type="PDB" id="8RPY">
    <property type="method" value="EM"/>
    <property type="resolution" value="2.64 A"/>
    <property type="chains" value="X=2-78"/>
</dbReference>
<dbReference type="PDB" id="8RPZ">
    <property type="method" value="EM"/>
    <property type="resolution" value="2.44 A"/>
    <property type="chains" value="X=2-78"/>
</dbReference>
<dbReference type="PDB" id="8RQ0">
    <property type="method" value="EM"/>
    <property type="resolution" value="2.44 A"/>
    <property type="chains" value="X=2-78"/>
</dbReference>
<dbReference type="PDB" id="8RQ2">
    <property type="method" value="EM"/>
    <property type="resolution" value="2.44 A"/>
    <property type="chains" value="X=2-78"/>
</dbReference>
<dbReference type="PDB" id="8SYL">
    <property type="method" value="EM"/>
    <property type="resolution" value="2.90 A"/>
    <property type="chains" value="Z=1-78"/>
</dbReference>
<dbReference type="PDB" id="8T5D">
    <property type="method" value="EM"/>
    <property type="resolution" value="3.20 A"/>
    <property type="chains" value="X=2-78"/>
</dbReference>
<dbReference type="PDB" id="8T5H">
    <property type="method" value="EM"/>
    <property type="resolution" value="3.30 A"/>
    <property type="chains" value="X=2-78"/>
</dbReference>
<dbReference type="PDB" id="8VS9">
    <property type="method" value="EM"/>
    <property type="resolution" value="3.90 A"/>
    <property type="chains" value="L28=1-78"/>
</dbReference>
<dbReference type="PDB" id="8VSA">
    <property type="method" value="EM"/>
    <property type="resolution" value="3.70 A"/>
    <property type="chains" value="L28=1-78"/>
</dbReference>
<dbReference type="PDB" id="8W51">
    <property type="method" value="EM"/>
    <property type="resolution" value="2.40 A"/>
    <property type="chains" value="Y=1-78"/>
</dbReference>
<dbReference type="PDB" id="8YUO">
    <property type="method" value="EM"/>
    <property type="resolution" value="2.25 A"/>
    <property type="chains" value="w=1-78"/>
</dbReference>
<dbReference type="PDB" id="8YUP">
    <property type="method" value="EM"/>
    <property type="resolution" value="2.39 A"/>
    <property type="chains" value="w=1-78"/>
</dbReference>
<dbReference type="PDB" id="8YUQ">
    <property type="method" value="EM"/>
    <property type="resolution" value="2.41 A"/>
    <property type="chains" value="w=1-78"/>
</dbReference>
<dbReference type="PDB" id="8YUR">
    <property type="method" value="EM"/>
    <property type="resolution" value="2.47 A"/>
    <property type="chains" value="w=1-78"/>
</dbReference>
<dbReference type="PDB" id="8YUS">
    <property type="method" value="EM"/>
    <property type="resolution" value="2.43 A"/>
    <property type="chains" value="w=1-78"/>
</dbReference>
<dbReference type="PDB" id="9D89">
    <property type="method" value="EM"/>
    <property type="resolution" value="1.95 A"/>
    <property type="chains" value="w=2-78"/>
</dbReference>
<dbReference type="PDB" id="9FBV">
    <property type="method" value="EM"/>
    <property type="resolution" value="2.40 A"/>
    <property type="chains" value="w=1-78"/>
</dbReference>
<dbReference type="PDB" id="9GFT">
    <property type="method" value="EM"/>
    <property type="resolution" value="3.10 A"/>
    <property type="chains" value="As/k=1-78"/>
</dbReference>
<dbReference type="PDB" id="9GGR">
    <property type="method" value="EM"/>
    <property type="resolution" value="3.20 A"/>
    <property type="chains" value="As/k=1-78"/>
</dbReference>
<dbReference type="PDB" id="9GR1">
    <property type="method" value="EM"/>
    <property type="resolution" value="3.17 A"/>
    <property type="chains" value="w=1-78"/>
</dbReference>
<dbReference type="PDB" id="9H3P">
    <property type="method" value="EM"/>
    <property type="resolution" value="7.06 A"/>
    <property type="chains" value="X=2-78"/>
</dbReference>
<dbReference type="PDB" id="9H3Q">
    <property type="method" value="EM"/>
    <property type="resolution" value="4.02 A"/>
    <property type="chains" value="X=2-78"/>
</dbReference>
<dbReference type="PDB" id="9H3R">
    <property type="method" value="EM"/>
    <property type="resolution" value="4.12 A"/>
    <property type="chains" value="X=2-78"/>
</dbReference>
<dbReference type="PDB" id="9H3S">
    <property type="method" value="EM"/>
    <property type="resolution" value="4.16 A"/>
    <property type="chains" value="X=2-78"/>
</dbReference>
<dbReference type="PDB" id="9H3T">
    <property type="method" value="EM"/>
    <property type="resolution" value="3.85 A"/>
    <property type="chains" value="X=2-78"/>
</dbReference>
<dbReference type="PDB" id="9H3U">
    <property type="method" value="EM"/>
    <property type="resolution" value="3.47 A"/>
    <property type="chains" value="X=2-78"/>
</dbReference>
<dbReference type="PDB" id="9H3V">
    <property type="method" value="EM"/>
    <property type="resolution" value="3.55 A"/>
    <property type="chains" value="X=2-78"/>
</dbReference>
<dbReference type="PDB" id="9H3W">
    <property type="method" value="EM"/>
    <property type="resolution" value="5.38 A"/>
    <property type="chains" value="X=2-78"/>
</dbReference>
<dbReference type="PDB" id="9H3X">
    <property type="method" value="EM"/>
    <property type="resolution" value="4.12 A"/>
    <property type="chains" value="X=2-78"/>
</dbReference>
<dbReference type="PDB" id="9H3Y">
    <property type="method" value="EM"/>
    <property type="resolution" value="3.09 A"/>
    <property type="chains" value="X=2-78"/>
</dbReference>
<dbReference type="PDB" id="9H3Z">
    <property type="method" value="EM"/>
    <property type="resolution" value="2.98 A"/>
    <property type="chains" value="X=2-78"/>
</dbReference>
<dbReference type="PDB" id="9HA6">
    <property type="method" value="EM"/>
    <property type="resolution" value="3.08 A"/>
    <property type="chains" value="X=2-78"/>
</dbReference>
<dbReference type="PDB" id="9MOR">
    <property type="method" value="EM"/>
    <property type="resolution" value="2.65 A"/>
    <property type="chains" value="X=1-78"/>
</dbReference>
<dbReference type="PDB" id="9MQ4">
    <property type="method" value="EM"/>
    <property type="resolution" value="2.78 A"/>
    <property type="chains" value="X=1-78"/>
</dbReference>
<dbReference type="PDBsum" id="3J5L"/>
<dbReference type="PDBsum" id="3J7Z"/>
<dbReference type="PDBsum" id="3J8G"/>
<dbReference type="PDBsum" id="3J9Y"/>
<dbReference type="PDBsum" id="3J9Z"/>
<dbReference type="PDBsum" id="3JA1"/>
<dbReference type="PDBsum" id="3JBU"/>
<dbReference type="PDBsum" id="3JBV"/>
<dbReference type="PDBsum" id="3JCD"/>
<dbReference type="PDBsum" id="3JCE"/>
<dbReference type="PDBsum" id="3JCJ"/>
<dbReference type="PDBsum" id="3JCN"/>
<dbReference type="PDBsum" id="4CSU"/>
<dbReference type="PDBsum" id="4U1U"/>
<dbReference type="PDBsum" id="4U1V"/>
<dbReference type="PDBsum" id="4U20"/>
<dbReference type="PDBsum" id="4U24"/>
<dbReference type="PDBsum" id="4U25"/>
<dbReference type="PDBsum" id="4U26"/>
<dbReference type="PDBsum" id="4U27"/>
<dbReference type="PDBsum" id="4UY8"/>
<dbReference type="PDBsum" id="4V50"/>
<dbReference type="PDBsum" id="4V52"/>
<dbReference type="PDBsum" id="4V53"/>
<dbReference type="PDBsum" id="4V54"/>
<dbReference type="PDBsum" id="4V55"/>
<dbReference type="PDBsum" id="4V56"/>
<dbReference type="PDBsum" id="4V57"/>
<dbReference type="PDBsum" id="4V5H"/>
<dbReference type="PDBsum" id="4V5Y"/>
<dbReference type="PDBsum" id="4V64"/>
<dbReference type="PDBsum" id="4V69"/>
<dbReference type="PDBsum" id="4V6C"/>
<dbReference type="PDBsum" id="4V6D"/>
<dbReference type="PDBsum" id="4V6E"/>
<dbReference type="PDBsum" id="4V6K"/>
<dbReference type="PDBsum" id="4V6L"/>
<dbReference type="PDBsum" id="4V6M"/>
<dbReference type="PDBsum" id="4V6N"/>
<dbReference type="PDBsum" id="4V6O"/>
<dbReference type="PDBsum" id="4V6P"/>
<dbReference type="PDBsum" id="4V6Q"/>
<dbReference type="PDBsum" id="4V6R"/>
<dbReference type="PDBsum" id="4V6S"/>
<dbReference type="PDBsum" id="4V6T"/>
<dbReference type="PDBsum" id="4V6V"/>
<dbReference type="PDBsum" id="4V6Y"/>
<dbReference type="PDBsum" id="4V6Z"/>
<dbReference type="PDBsum" id="4V70"/>
<dbReference type="PDBsum" id="4V71"/>
<dbReference type="PDBsum" id="4V72"/>
<dbReference type="PDBsum" id="4V73"/>
<dbReference type="PDBsum" id="4V74"/>
<dbReference type="PDBsum" id="4V75"/>
<dbReference type="PDBsum" id="4V76"/>
<dbReference type="PDBsum" id="4V77"/>
<dbReference type="PDBsum" id="4V78"/>
<dbReference type="PDBsum" id="4V79"/>
<dbReference type="PDBsum" id="4V7A"/>
<dbReference type="PDBsum" id="4V7B"/>
<dbReference type="PDBsum" id="4V7C"/>
<dbReference type="PDBsum" id="4V7D"/>
<dbReference type="PDBsum" id="4V7I"/>
<dbReference type="PDBsum" id="4V7S"/>
<dbReference type="PDBsum" id="4V7T"/>
<dbReference type="PDBsum" id="4V7U"/>
<dbReference type="PDBsum" id="4V7V"/>
<dbReference type="PDBsum" id="4V85"/>
<dbReference type="PDBsum" id="4V89"/>
<dbReference type="PDBsum" id="4V9C"/>
<dbReference type="PDBsum" id="4V9D"/>
<dbReference type="PDBsum" id="4V9O"/>
<dbReference type="PDBsum" id="4V9P"/>
<dbReference type="PDBsum" id="4WF1"/>
<dbReference type="PDBsum" id="4WOI"/>
<dbReference type="PDBsum" id="4WWW"/>
<dbReference type="PDBsum" id="4YBB"/>
<dbReference type="PDBsum" id="5ADY"/>
<dbReference type="PDBsum" id="5AFI"/>
<dbReference type="PDBsum" id="5GAD"/>
<dbReference type="PDBsum" id="5GAE"/>
<dbReference type="PDBsum" id="5GAF"/>
<dbReference type="PDBsum" id="5GAG"/>
<dbReference type="PDBsum" id="5GAH"/>
<dbReference type="PDBsum" id="5H5U"/>
<dbReference type="PDBsum" id="5IQR"/>
<dbReference type="PDBsum" id="5IT8"/>
<dbReference type="PDBsum" id="5J5B"/>
<dbReference type="PDBsum" id="5J7L"/>
<dbReference type="PDBsum" id="5J88"/>
<dbReference type="PDBsum" id="5J8A"/>
<dbReference type="PDBsum" id="5J91"/>
<dbReference type="PDBsum" id="5JC9"/>
<dbReference type="PDBsum" id="5JTE"/>
<dbReference type="PDBsum" id="5JU8"/>
<dbReference type="PDBsum" id="5KCR"/>
<dbReference type="PDBsum" id="5KCS"/>
<dbReference type="PDBsum" id="5KPS"/>
<dbReference type="PDBsum" id="5KPV"/>
<dbReference type="PDBsum" id="5KPW"/>
<dbReference type="PDBsum" id="5KPX"/>
<dbReference type="PDBsum" id="5L3P"/>
<dbReference type="PDBsum" id="5LZA"/>
<dbReference type="PDBsum" id="5LZB"/>
<dbReference type="PDBsum" id="5LZC"/>
<dbReference type="PDBsum" id="5LZD"/>
<dbReference type="PDBsum" id="5LZE"/>
<dbReference type="PDBsum" id="5LZF"/>
<dbReference type="PDBsum" id="5MDV"/>
<dbReference type="PDBsum" id="5MDW"/>
<dbReference type="PDBsum" id="5MDY"/>
<dbReference type="PDBsum" id="5MDZ"/>
<dbReference type="PDBsum" id="5MGP"/>
<dbReference type="PDBsum" id="5NCO"/>
<dbReference type="PDBsum" id="5NP6"/>
<dbReference type="PDBsum" id="5NWY"/>
<dbReference type="PDBsum" id="5O2R"/>
<dbReference type="PDBsum" id="5U4I"/>
<dbReference type="PDBsum" id="5U9F"/>
<dbReference type="PDBsum" id="5U9G"/>
<dbReference type="PDBsum" id="5UYK"/>
<dbReference type="PDBsum" id="5UYL"/>
<dbReference type="PDBsum" id="5UYM"/>
<dbReference type="PDBsum" id="5UYN"/>
<dbReference type="PDBsum" id="5UYP"/>
<dbReference type="PDBsum" id="5UYQ"/>
<dbReference type="PDBsum" id="5WDT"/>
<dbReference type="PDBsum" id="5WE4"/>
<dbReference type="PDBsum" id="5WE6"/>
<dbReference type="PDBsum" id="5WF0"/>
<dbReference type="PDBsum" id="5WFK"/>
<dbReference type="PDBsum" id="5WFS"/>
<dbReference type="PDBsum" id="6BU8"/>
<dbReference type="PDBsum" id="6BY1"/>
<dbReference type="PDBsum" id="6C4I"/>
<dbReference type="PDBsum" id="6DNC"/>
<dbReference type="PDBsum" id="6ENF"/>
<dbReference type="PDBsum" id="6ENJ"/>
<dbReference type="PDBsum" id="6ENU"/>
<dbReference type="PDBsum" id="6GBZ"/>
<dbReference type="PDBsum" id="6GC0"/>
<dbReference type="PDBsum" id="6GC4"/>
<dbReference type="PDBsum" id="6GC8"/>
<dbReference type="PDBsum" id="6GWT"/>
<dbReference type="PDBsum" id="6GXM"/>
<dbReference type="PDBsum" id="6GXN"/>
<dbReference type="PDBsum" id="6GXO"/>
<dbReference type="PDBsum" id="6GXP"/>
<dbReference type="PDBsum" id="6H4N"/>
<dbReference type="PDBsum" id="6H58"/>
<dbReference type="PDBsum" id="6HRM"/>
<dbReference type="PDBsum" id="6I0Y"/>
<dbReference type="PDBsum" id="6I7V"/>
<dbReference type="PDBsum" id="6O9K"/>
<dbReference type="PDBsum" id="6OFX"/>
<dbReference type="PDBsum" id="6OG7"/>
<dbReference type="PDBsum" id="6OGF"/>
<dbReference type="PDBsum" id="6OGG"/>
<dbReference type="PDBsum" id="6OGI"/>
<dbReference type="PDBsum" id="6OM6"/>
<dbReference type="PDBsum" id="6ORE"/>
<dbReference type="PDBsum" id="6ORL"/>
<dbReference type="PDBsum" id="6OSK"/>
<dbReference type="PDBsum" id="6OSQ"/>
<dbReference type="PDBsum" id="6OST"/>
<dbReference type="PDBsum" id="6OT3"/>
<dbReference type="PDBsum" id="6OUO"/>
<dbReference type="PDBsum" id="6PJ6"/>
<dbReference type="PDBsum" id="6Q97"/>
<dbReference type="PDBsum" id="6Q98"/>
<dbReference type="PDBsum" id="6Q9A"/>
<dbReference type="PDBsum" id="6QDW"/>
<dbReference type="PDBsum" id="6QUL"/>
<dbReference type="PDBsum" id="6S0K"/>
<dbReference type="PDBsum" id="6SZS"/>
<dbReference type="PDBsum" id="6TBV"/>
<dbReference type="PDBsum" id="6TC3"/>
<dbReference type="PDBsum" id="6U48"/>
<dbReference type="PDBsum" id="6VU3"/>
<dbReference type="PDBsum" id="6VWL"/>
<dbReference type="PDBsum" id="6VWM"/>
<dbReference type="PDBsum" id="6VWN"/>
<dbReference type="PDBsum" id="6VYQ"/>
<dbReference type="PDBsum" id="6VYR"/>
<dbReference type="PDBsum" id="6VYS"/>
<dbReference type="PDBsum" id="6VYT"/>
<dbReference type="PDBsum" id="6VYU"/>
<dbReference type="PDBsum" id="6VYW"/>
<dbReference type="PDBsum" id="6VYX"/>
<dbReference type="PDBsum" id="6VYY"/>
<dbReference type="PDBsum" id="6VYZ"/>
<dbReference type="PDBsum" id="6VZ2"/>
<dbReference type="PDBsum" id="6VZ3"/>
<dbReference type="PDBsum" id="6VZ5"/>
<dbReference type="PDBsum" id="6VZ7"/>
<dbReference type="PDBsum" id="6VZJ"/>
<dbReference type="PDBsum" id="6WD0"/>
<dbReference type="PDBsum" id="6WD1"/>
<dbReference type="PDBsum" id="6WD2"/>
<dbReference type="PDBsum" id="6WD3"/>
<dbReference type="PDBsum" id="6WD4"/>
<dbReference type="PDBsum" id="6WD5"/>
<dbReference type="PDBsum" id="6WD6"/>
<dbReference type="PDBsum" id="6WD7"/>
<dbReference type="PDBsum" id="6WD8"/>
<dbReference type="PDBsum" id="6WD9"/>
<dbReference type="PDBsum" id="6WDA"/>
<dbReference type="PDBsum" id="6WDB"/>
<dbReference type="PDBsum" id="6WDC"/>
<dbReference type="PDBsum" id="6WDD"/>
<dbReference type="PDBsum" id="6WDE"/>
<dbReference type="PDBsum" id="6WDF"/>
<dbReference type="PDBsum" id="6WDG"/>
<dbReference type="PDBsum" id="6WDH"/>
<dbReference type="PDBsum" id="6WDI"/>
<dbReference type="PDBsum" id="6WDJ"/>
<dbReference type="PDBsum" id="6WDK"/>
<dbReference type="PDBsum" id="6WDL"/>
<dbReference type="PDBsum" id="6WDM"/>
<dbReference type="PDBsum" id="6WNT"/>
<dbReference type="PDBsum" id="6WNV"/>
<dbReference type="PDBsum" id="6WNW"/>
<dbReference type="PDBsum" id="6X6T"/>
<dbReference type="PDBsum" id="6X7F"/>
<dbReference type="PDBsum" id="6X7K"/>
<dbReference type="PDBsum" id="6X9Q"/>
<dbReference type="PDBsum" id="6XDQ"/>
<dbReference type="PDBsum" id="6XDR"/>
<dbReference type="PDBsum" id="6XGF"/>
<dbReference type="PDBsum" id="6XII"/>
<dbReference type="PDBsum" id="6XIJ"/>
<dbReference type="PDBsum" id="6XZ7"/>
<dbReference type="PDBsum" id="6XZA"/>
<dbReference type="PDBsum" id="6XZB"/>
<dbReference type="PDBsum" id="6Y69"/>
<dbReference type="PDBsum" id="6YS3"/>
<dbReference type="PDBsum" id="6YSR"/>
<dbReference type="PDBsum" id="6YSS"/>
<dbReference type="PDBsum" id="6YSU"/>
<dbReference type="PDBsum" id="6ZTJ"/>
<dbReference type="PDBsum" id="6ZTL"/>
<dbReference type="PDBsum" id="6ZTM"/>
<dbReference type="PDBsum" id="6ZTN"/>
<dbReference type="PDBsum" id="6ZTO"/>
<dbReference type="PDBsum" id="6ZTP"/>
<dbReference type="PDBsum" id="6ZU1"/>
<dbReference type="PDBsum" id="7ABZ"/>
<dbReference type="PDBsum" id="7AC7"/>
<dbReference type="PDBsum" id="7ACJ"/>
<dbReference type="PDBsum" id="7ACR"/>
<dbReference type="PDBsum" id="7B5K"/>
<dbReference type="PDBsum" id="7BL2"/>
<dbReference type="PDBsum" id="7BL3"/>
<dbReference type="PDBsum" id="7BL4"/>
<dbReference type="PDBsum" id="7BL5"/>
<dbReference type="PDBsum" id="7BL6"/>
<dbReference type="PDBsum" id="7BV8"/>
<dbReference type="PDBsum" id="7D6Z"/>
<dbReference type="PDBsum" id="7D80"/>
<dbReference type="PDBsum" id="7JSS"/>
<dbReference type="PDBsum" id="7JSW"/>
<dbReference type="PDBsum" id="7JSZ"/>
<dbReference type="PDBsum" id="7JT1"/>
<dbReference type="PDBsum" id="7JT2"/>
<dbReference type="PDBsum" id="7JT3"/>
<dbReference type="PDBsum" id="7K00"/>
<dbReference type="PDBsum" id="7K50"/>
<dbReference type="PDBsum" id="7K51"/>
<dbReference type="PDBsum" id="7K52"/>
<dbReference type="PDBsum" id="7K53"/>
<dbReference type="PDBsum" id="7K54"/>
<dbReference type="PDBsum" id="7K55"/>
<dbReference type="PDBsum" id="7LV0"/>
<dbReference type="PDBsum" id="7LVK"/>
<dbReference type="PDBsum" id="7M5D"/>
<dbReference type="PDBsum" id="7N1P"/>
<dbReference type="PDBsum" id="7N2C"/>
<dbReference type="PDBsum" id="7N2U"/>
<dbReference type="PDBsum" id="7N2V"/>
<dbReference type="PDBsum" id="7N30"/>
<dbReference type="PDBsum" id="7N31"/>
<dbReference type="PDBsum" id="7NBU"/>
<dbReference type="PDBsum" id="7NWT"/>
<dbReference type="PDBsum" id="7O19"/>
<dbReference type="PDBsum" id="7O1A"/>
<dbReference type="PDBsum" id="7O1C"/>
<dbReference type="PDBsum" id="7OIZ"/>
<dbReference type="PDBsum" id="7OJ0"/>
<dbReference type="PDBsum" id="7P3K"/>
<dbReference type="PDBsum" id="7PJS"/>
<dbReference type="PDBsum" id="7PJT"/>
<dbReference type="PDBsum" id="7PJV"/>
<dbReference type="PDBsum" id="7PJW"/>
<dbReference type="PDBsum" id="7PJX"/>
<dbReference type="PDBsum" id="7PJY"/>
<dbReference type="PDBsum" id="7PJZ"/>
<dbReference type="PDBsum" id="7Q4K"/>
<dbReference type="PDBsum" id="7QG8"/>
<dbReference type="PDBsum" id="7QGH"/>
<dbReference type="PDBsum" id="7QGN"/>
<dbReference type="PDBsum" id="7QGR"/>
<dbReference type="PDBsum" id="7QQ3"/>
<dbReference type="PDBsum" id="7S1G"/>
<dbReference type="PDBsum" id="7S1H"/>
<dbReference type="PDBsum" id="7S1I"/>
<dbReference type="PDBsum" id="7S1J"/>
<dbReference type="PDBsum" id="7S1K"/>
<dbReference type="PDBsum" id="7SA4"/>
<dbReference type="PDBsum" id="7SS9"/>
<dbReference type="PDBsum" id="7SSD"/>
<dbReference type="PDBsum" id="7SSL"/>
<dbReference type="PDBsum" id="7SSN"/>
<dbReference type="PDBsum" id="7SSO"/>
<dbReference type="PDBsum" id="7SSW"/>
<dbReference type="PDBsum" id="7ST2"/>
<dbReference type="PDBsum" id="7ST6"/>
<dbReference type="PDBsum" id="7ST7"/>
<dbReference type="PDBsum" id="7TOS"/>
<dbReference type="PDBsum" id="7UG7"/>
<dbReference type="PDBsum" id="7UPH"/>
<dbReference type="PDBsum" id="7Y7C"/>
<dbReference type="PDBsum" id="7Y7D"/>
<dbReference type="PDBsum" id="7Y7E"/>
<dbReference type="PDBsum" id="7Y7F"/>
<dbReference type="PDBsum" id="7Y7G"/>
<dbReference type="PDBsum" id="7Y7H"/>
<dbReference type="PDBsum" id="7YLA"/>
<dbReference type="PDBsum" id="7Z20"/>
<dbReference type="PDBsum" id="7ZOD"/>
<dbReference type="PDBsum" id="7ZP8"/>
<dbReference type="PDBsum" id="7ZQ5"/>
<dbReference type="PDBsum" id="7ZQ6"/>
<dbReference type="PDBsum" id="7ZTA"/>
<dbReference type="PDBsum" id="8A3L"/>
<dbReference type="PDBsum" id="8AKN"/>
<dbReference type="PDBsum" id="8AM9"/>
<dbReference type="PDBsum" id="8ANA"/>
<dbReference type="PDBsum" id="8AP4"/>
<dbReference type="PDBsum" id="8AYE"/>
<dbReference type="PDBsum" id="8B0X"/>
<dbReference type="PDBsum" id="8B7Y"/>
<dbReference type="PDBsum" id="8BF7"/>
<dbReference type="PDBsum" id="8BGE"/>
<dbReference type="PDBsum" id="8BGH"/>
<dbReference type="PDBsum" id="8BH4"/>
<dbReference type="PDBsum" id="8BHJ"/>
<dbReference type="PDBsum" id="8BHL"/>
<dbReference type="PDBsum" id="8BHN"/>
<dbReference type="PDBsum" id="8BHP"/>
<dbReference type="PDBsum" id="8BIL"/>
<dbReference type="PDBsum" id="8BIM"/>
<dbReference type="PDBsum" id="8C8X"/>
<dbReference type="PDBsum" id="8C8Y"/>
<dbReference type="PDBsum" id="8C8Z"/>
<dbReference type="PDBsum" id="8CAM"/>
<dbReference type="PDBsum" id="8CEU"/>
<dbReference type="PDBsum" id="8CGD"/>
<dbReference type="PDBsum" id="8CGK"/>
<dbReference type="PDBsum" id="8CGV"/>
<dbReference type="PDBsum" id="8EIU"/>
<dbReference type="PDBsum" id="8EKC"/>
<dbReference type="PDBsum" id="8EMM"/>
<dbReference type="PDBsum" id="8FIZ"/>
<dbReference type="PDBsum" id="8FTO"/>
<dbReference type="PDBsum" id="8FZD"/>
<dbReference type="PDBsum" id="8FZE"/>
<dbReference type="PDBsum" id="8FZF"/>
<dbReference type="PDBsum" id="8FZG"/>
<dbReference type="PDBsum" id="8FZH"/>
<dbReference type="PDBsum" id="8FZI"/>
<dbReference type="PDBsum" id="8FZJ"/>
<dbReference type="PDBsum" id="8G2U"/>
<dbReference type="PDBsum" id="8G31"/>
<dbReference type="PDBsum" id="8G34"/>
<dbReference type="PDBsum" id="8G38"/>
<dbReference type="PDBsum" id="8G6W"/>
<dbReference type="PDBsum" id="8G6X"/>
<dbReference type="PDBsum" id="8G6Y"/>
<dbReference type="PDBsum" id="8G7P"/>
<dbReference type="PDBsum" id="8G7Q"/>
<dbReference type="PDBsum" id="8G7R"/>
<dbReference type="PDBsum" id="8G7S"/>
<dbReference type="PDBsum" id="8HSP"/>
<dbReference type="PDBsum" id="8HTZ"/>
<dbReference type="PDBsum" id="8HU1"/>
<dbReference type="PDBsum" id="8IFB"/>
<dbReference type="PDBsum" id="8IFC"/>
<dbReference type="PDBsum" id="8J1Z"/>
<dbReference type="PDBsum" id="8P16"/>
<dbReference type="PDBsum" id="8P17"/>
<dbReference type="PDBsum" id="8P18"/>
<dbReference type="PDBsum" id="8PEG"/>
<dbReference type="PDBsum" id="8PHJ"/>
<dbReference type="PDBsum" id="8PKL"/>
<dbReference type="PDBsum" id="8PVA"/>
<dbReference type="PDBsum" id="8Q4F"/>
<dbReference type="PDBsum" id="8QBT"/>
<dbReference type="PDBsum" id="8QK7"/>
<dbReference type="PDBsum" id="8QOA"/>
<dbReference type="PDBsum" id="8R3V"/>
<dbReference type="PDBsum" id="8R6C"/>
<dbReference type="PDBsum" id="8R8M"/>
<dbReference type="PDBsum" id="8RCL"/>
<dbReference type="PDBsum" id="8RCM"/>
<dbReference type="PDBsum" id="8RCS"/>
<dbReference type="PDBsum" id="8RCT"/>
<dbReference type="PDBsum" id="8RPY"/>
<dbReference type="PDBsum" id="8RPZ"/>
<dbReference type="PDBsum" id="8RQ0"/>
<dbReference type="PDBsum" id="8RQ2"/>
<dbReference type="PDBsum" id="8SYL"/>
<dbReference type="PDBsum" id="8T5D"/>
<dbReference type="PDBsum" id="8T5H"/>
<dbReference type="PDBsum" id="8VS9"/>
<dbReference type="PDBsum" id="8VSA"/>
<dbReference type="PDBsum" id="8W51"/>
<dbReference type="PDBsum" id="8YUO"/>
<dbReference type="PDBsum" id="8YUP"/>
<dbReference type="PDBsum" id="8YUQ"/>
<dbReference type="PDBsum" id="8YUR"/>
<dbReference type="PDBsum" id="8YUS"/>
<dbReference type="PDBsum" id="9D89"/>
<dbReference type="PDBsum" id="9FBV"/>
<dbReference type="PDBsum" id="9GFT"/>
<dbReference type="PDBsum" id="9GGR"/>
<dbReference type="PDBsum" id="9GR1"/>
<dbReference type="PDBsum" id="9H3P"/>
<dbReference type="PDBsum" id="9H3Q"/>
<dbReference type="PDBsum" id="9H3R"/>
<dbReference type="PDBsum" id="9H3S"/>
<dbReference type="PDBsum" id="9H3T"/>
<dbReference type="PDBsum" id="9H3U"/>
<dbReference type="PDBsum" id="9H3V"/>
<dbReference type="PDBsum" id="9H3W"/>
<dbReference type="PDBsum" id="9H3X"/>
<dbReference type="PDBsum" id="9H3Y"/>
<dbReference type="PDBsum" id="9H3Z"/>
<dbReference type="PDBsum" id="9HA6"/>
<dbReference type="PDBsum" id="9MOR"/>
<dbReference type="PDBsum" id="9MQ4"/>
<dbReference type="EMDB" id="EMD-0076"/>
<dbReference type="EMDB" id="EMD-0080"/>
<dbReference type="EMDB" id="EMD-0081"/>
<dbReference type="EMDB" id="EMD-0082"/>
<dbReference type="EMDB" id="EMD-0083"/>
<dbReference type="EMDB" id="EMD-0137"/>
<dbReference type="EMDB" id="EMD-0139"/>
<dbReference type="EMDB" id="EMD-0261"/>
<dbReference type="EMDB" id="EMD-0322"/>
<dbReference type="EMDB" id="EMD-10073"/>
<dbReference type="EMDB" id="EMD-10353"/>
<dbReference type="EMDB" id="EMD-10453"/>
<dbReference type="EMDB" id="EMD-10458"/>
<dbReference type="EMDB" id="EMD-10655"/>
<dbReference type="EMDB" id="EMD-10656"/>
<dbReference type="EMDB" id="EMD-10657"/>
<dbReference type="EMDB" id="EMD-10705"/>
<dbReference type="EMDB" id="EMD-10905"/>
<dbReference type="EMDB" id="EMD-10906"/>
<dbReference type="EMDB" id="EMD-10908"/>
<dbReference type="EMDB" id="EMD-11418"/>
<dbReference type="EMDB" id="EMD-11419"/>
<dbReference type="EMDB" id="EMD-11420"/>
<dbReference type="EMDB" id="EMD-11421"/>
<dbReference type="EMDB" id="EMD-11422"/>
<dbReference type="EMDB" id="EMD-11423"/>
<dbReference type="EMDB" id="EMD-11426"/>
<dbReference type="EMDB" id="EMD-11710"/>
<dbReference type="EMDB" id="EMD-11713"/>
<dbReference type="EMDB" id="EMD-11717"/>
<dbReference type="EMDB" id="EMD-11718"/>
<dbReference type="EMDB" id="EMD-12035"/>
<dbReference type="EMDB" id="EMD-12215"/>
<dbReference type="EMDB" id="EMD-12216"/>
<dbReference type="EMDB" id="EMD-12217"/>
<dbReference type="EMDB" id="EMD-12218"/>
<dbReference type="EMDB" id="EMD-12219"/>
<dbReference type="EMDB" id="EMD-12261"/>
<dbReference type="EMDB" id="EMD-12635"/>
<dbReference type="EMDB" id="EMD-12693"/>
<dbReference type="EMDB" id="EMD-12694"/>
<dbReference type="EMDB" id="EMD-12695"/>
<dbReference type="EMDB" id="EMD-12936"/>
<dbReference type="EMDB" id="EMD-12937"/>
<dbReference type="EMDB" id="EMD-13180"/>
<dbReference type="EMDB" id="EMD-13458"/>
<dbReference type="EMDB" id="EMD-13459"/>
<dbReference type="EMDB" id="EMD-13461"/>
<dbReference type="EMDB" id="EMD-13462"/>
<dbReference type="EMDB" id="EMD-13463"/>
<dbReference type="EMDB" id="EMD-13464"/>
<dbReference type="EMDB" id="EMD-13465"/>
<dbReference type="EMDB" id="EMD-13805"/>
<dbReference type="EMDB" id="EMD-13952"/>
<dbReference type="EMDB" id="EMD-13955"/>
<dbReference type="EMDB" id="EMD-13956"/>
<dbReference type="EMDB" id="EMD-13958"/>
<dbReference type="EMDB" id="EMD-14121"/>
<dbReference type="EMDB" id="EMD-14454"/>
<dbReference type="EMDB" id="EMD-14846"/>
<dbReference type="EMDB" id="EMD-14850"/>
<dbReference type="EMDB" id="EMD-14864"/>
<dbReference type="EMDB" id="EMD-14865"/>
<dbReference type="EMDB" id="EMD-14956"/>
<dbReference type="EMDB" id="EMD-15116"/>
<dbReference type="EMDB" id="EMD-15558"/>
<dbReference type="EMDB" id="EMD-15712"/>
<dbReference type="EMDB" id="EMD-15793"/>
<dbReference type="EMDB" id="EMD-15905"/>
<dbReference type="EMDB" id="EMD-16015"/>
<dbReference type="EMDB" id="EMD-16029"/>
<dbReference type="EMDB" id="EMD-16031"/>
<dbReference type="EMDB" id="EMD-16047"/>
<dbReference type="EMDB" id="EMD-16057"/>
<dbReference type="EMDB" id="EMD-16059"/>
<dbReference type="EMDB" id="EMD-16062"/>
<dbReference type="EMDB" id="EMD-16065"/>
<dbReference type="EMDB" id="EMD-16081"/>
<dbReference type="EMDB" id="EMD-16082"/>
<dbReference type="EMDB" id="EMD-16494"/>
<dbReference type="EMDB" id="EMD-16495"/>
<dbReference type="EMDB" id="EMD-16496"/>
<dbReference type="EMDB" id="EMD-16530"/>
<dbReference type="EMDB" id="EMD-16613"/>
<dbReference type="EMDB" id="EMD-16641"/>
<dbReference type="EMDB" id="EMD-16646"/>
<dbReference type="EMDB" id="EMD-16652"/>
<dbReference type="EMDB" id="EMD-17346"/>
<dbReference type="EMDB" id="EMD-17347"/>
<dbReference type="EMDB" id="EMD-17348"/>
<dbReference type="EMDB" id="EMD-17631"/>
<dbReference type="EMDB" id="EMD-17667"/>
<dbReference type="EMDB" id="EMD-17743"/>
<dbReference type="EMDB" id="EMD-17959"/>
<dbReference type="EMDB" id="EMD-18145"/>
<dbReference type="EMDB" id="EMD-18320"/>
<dbReference type="EMDB" id="EMD-18458"/>
<dbReference type="EMDB" id="EMD-18534"/>
<dbReference type="EMDB" id="EMD-18875"/>
<dbReference type="EMDB" id="EMD-18950"/>
<dbReference type="EMDB" id="EMD-19004"/>
<dbReference type="EMDB" id="EMD-19054"/>
<dbReference type="EMDB" id="EMD-19055"/>
<dbReference type="EMDB" id="EMD-19058"/>
<dbReference type="EMDB" id="EMD-19059"/>
<dbReference type="EMDB" id="EMD-19426"/>
<dbReference type="EMDB" id="EMD-19427"/>
<dbReference type="EMDB" id="EMD-19428"/>
<dbReference type="EMDB" id="EMD-19429"/>
<dbReference type="EMDB" id="EMD-20048"/>
<dbReference type="EMDB" id="EMD-20052"/>
<dbReference type="EMDB" id="EMD-21420"/>
<dbReference type="EMDB" id="EMD-21421"/>
<dbReference type="EMDB" id="EMD-21422"/>
<dbReference type="EMDB" id="EMD-21620"/>
<dbReference type="EMDB" id="EMD-21625"/>
<dbReference type="EMDB" id="EMD-21630"/>
<dbReference type="EMDB" id="EMD-21631"/>
<dbReference type="EMDB" id="EMD-21632"/>
<dbReference type="EMDB" id="EMD-21633"/>
<dbReference type="EMDB" id="EMD-21634"/>
<dbReference type="EMDB" id="EMD-21635"/>
<dbReference type="EMDB" id="EMD-21636"/>
<dbReference type="EMDB" id="EMD-21637"/>
<dbReference type="EMDB" id="EMD-21638"/>
<dbReference type="EMDB" id="EMD-21639"/>
<dbReference type="EMDB" id="EMD-21640"/>
<dbReference type="EMDB" id="EMD-21641"/>
<dbReference type="EMDB" id="EMD-21856"/>
<dbReference type="EMDB" id="EMD-21857"/>
<dbReference type="EMDB" id="EMD-21858"/>
<dbReference type="EMDB" id="EMD-22459"/>
<dbReference type="EMDB" id="EMD-22461"/>
<dbReference type="EMDB" id="EMD-22464"/>
<dbReference type="EMDB" id="EMD-22466"/>
<dbReference type="EMDB" id="EMD-22469"/>
<dbReference type="EMDB" id="EMD-22472"/>
<dbReference type="EMDB" id="EMD-22669"/>
<dbReference type="EMDB" id="EMD-22670"/>
<dbReference type="EMDB" id="EMD-22671"/>
<dbReference type="EMDB" id="EMD-22672"/>
<dbReference type="EMDB" id="EMD-22673"/>
<dbReference type="EMDB" id="EMD-22674"/>
<dbReference type="EMDB" id="EMD-23528"/>
<dbReference type="EMDB" id="EMD-24120"/>
<dbReference type="EMDB" id="EMD-24132"/>
<dbReference type="EMDB" id="EMD-24133"/>
<dbReference type="EMDB" id="EMD-24134"/>
<dbReference type="EMDB" id="EMD-24135"/>
<dbReference type="EMDB" id="EMD-24136"/>
<dbReference type="EMDB" id="EMD-24803"/>
<dbReference type="EMDB" id="EMD-25405"/>
<dbReference type="EMDB" id="EMD-25407"/>
<dbReference type="EMDB" id="EMD-25409"/>
<dbReference type="EMDB" id="EMD-25410"/>
<dbReference type="EMDB" id="EMD-25411"/>
<dbReference type="EMDB" id="EMD-25415"/>
<dbReference type="EMDB" id="EMD-25418"/>
<dbReference type="EMDB" id="EMD-25420"/>
<dbReference type="EMDB" id="EMD-25421"/>
<dbReference type="EMDB" id="EMD-30215"/>
<dbReference type="EMDB" id="EMD-30598"/>
<dbReference type="EMDB" id="EMD-30611"/>
<dbReference type="EMDB" id="EMD-33660"/>
<dbReference type="EMDB" id="EMD-33661"/>
<dbReference type="EMDB" id="EMD-33662"/>
<dbReference type="EMDB" id="EMD-33663"/>
<dbReference type="EMDB" id="EMD-33664"/>
<dbReference type="EMDB" id="EMD-33665"/>
<dbReference type="EMDB" id="EMD-33904"/>
<dbReference type="EMDB" id="EMD-3489"/>
<dbReference type="EMDB" id="EMD-3490"/>
<dbReference type="EMDB" id="EMD-3492"/>
<dbReference type="EMDB" id="EMD-3493"/>
<dbReference type="EMDB" id="EMD-35001"/>
<dbReference type="EMDB" id="EMD-35020"/>
<dbReference type="EMDB" id="EMD-35022"/>
<dbReference type="EMDB" id="EMD-3508"/>
<dbReference type="EMDB" id="EMD-35411"/>
<dbReference type="EMDB" id="EMD-35412"/>
<dbReference type="EMDB" id="EMD-35939"/>
<dbReference type="EMDB" id="EMD-3617"/>
<dbReference type="EMDB" id="EMD-3713"/>
<dbReference type="EMDB" id="EMD-37271"/>
<dbReference type="EMDB" id="EMD-3730"/>
<dbReference type="EMDB" id="EMD-3898"/>
<dbReference type="EMDB" id="EMD-3899"/>
<dbReference type="EMDB" id="EMD-3903"/>
<dbReference type="EMDB" id="EMD-39577"/>
<dbReference type="EMDB" id="EMD-39578"/>
<dbReference type="EMDB" id="EMD-39579"/>
<dbReference type="EMDB" id="EMD-39580"/>
<dbReference type="EMDB" id="EMD-39581"/>
<dbReference type="EMDB" id="EMD-4001"/>
<dbReference type="EMDB" id="EMD-4121"/>
<dbReference type="EMDB" id="EMD-4122"/>
<dbReference type="EMDB" id="EMD-4123"/>
<dbReference type="EMDB" id="EMD-4124"/>
<dbReference type="EMDB" id="EMD-4125"/>
<dbReference type="EMDB" id="EMD-4126"/>
<dbReference type="EMDB" id="EMD-4378"/>
<dbReference type="EMDB" id="EMD-4379"/>
<dbReference type="EMDB" id="EMD-4380"/>
<dbReference type="EMDB" id="EMD-4383"/>
<dbReference type="EMDB" id="EMD-4476"/>
<dbReference type="EMDB" id="EMD-4477"/>
<dbReference type="EMDB" id="EMD-4478"/>
<dbReference type="EMDB" id="EMD-4638"/>
<dbReference type="EMDB" id="EMD-50296"/>
<dbReference type="EMDB" id="EMD-51318"/>
<dbReference type="EMDB" id="EMD-51340"/>
<dbReference type="EMDB" id="EMD-51833"/>
<dbReference type="EMDB" id="EMD-51834"/>
<dbReference type="EMDB" id="EMD-51835"/>
<dbReference type="EMDB" id="EMD-51836"/>
<dbReference type="EMDB" id="EMD-51837"/>
<dbReference type="EMDB" id="EMD-51838"/>
<dbReference type="EMDB" id="EMD-51839"/>
<dbReference type="EMDB" id="EMD-51840"/>
<dbReference type="EMDB" id="EMD-51841"/>
<dbReference type="EMDB" id="EMD-51842"/>
<dbReference type="EMDB" id="EMD-51843"/>
<dbReference type="EMDB" id="EMD-51978"/>
<dbReference type="EMDB" id="EMD-6667"/>
<dbReference type="EMDB" id="EMD-7289"/>
<dbReference type="EMDB" id="EMD-7341"/>
<dbReference type="EMDB" id="EMD-8000"/>
<dbReference type="EMDB" id="EMD-8001"/>
<dbReference type="EMDB" id="EMD-8002"/>
<dbReference type="EMDB" id="EMD-8003"/>
<dbReference type="EMDB" id="EMD-8004"/>
<dbReference type="EMDB" id="EMD-8107"/>
<dbReference type="EMDB" id="EMD-8175"/>
<dbReference type="EMDB" id="EMD-8176"/>
<dbReference type="EMDB" id="EMD-8237"/>
<dbReference type="EMDB" id="EMD-8238"/>
<dbReference type="EMDB" id="EMD-8279"/>
<dbReference type="EMDB" id="EMD-8280"/>
<dbReference type="EMDB" id="EMD-8281"/>
<dbReference type="EMDB" id="EMD-8282"/>
<dbReference type="EMDB" id="EMD-8505"/>
<dbReference type="EMDB" id="EMD-8615"/>
<dbReference type="EMDB" id="EMD-8616"/>
<dbReference type="EMDB" id="EMD-8617"/>
<dbReference type="EMDB" id="EMD-8618"/>
<dbReference type="EMDB" id="EMD-8619"/>
<dbReference type="EMDB" id="EMD-8620"/>
<dbReference type="EMDB" id="EMD-8813"/>
<dbReference type="EMDB" id="EMD-8814"/>
<dbReference type="EMDB" id="EMD-8815"/>
<dbReference type="EMDB" id="EMD-8828"/>
<dbReference type="SMR" id="P0A7M2"/>
<dbReference type="BioGRID" id="4262565">
    <property type="interactions" value="148"/>
</dbReference>
<dbReference type="BioGRID" id="851280">
    <property type="interactions" value="3"/>
</dbReference>
<dbReference type="ComplexPortal" id="CPX-3807">
    <property type="entry name" value="50S large ribosomal subunit"/>
</dbReference>
<dbReference type="DIP" id="DIP-35745N"/>
<dbReference type="FunCoup" id="P0A7M2">
    <property type="interactions" value="850"/>
</dbReference>
<dbReference type="IntAct" id="P0A7M2">
    <property type="interactions" value="146"/>
</dbReference>
<dbReference type="STRING" id="511145.b3637"/>
<dbReference type="ChEMBL" id="CHEMBL2363119"/>
<dbReference type="jPOST" id="P0A7M2"/>
<dbReference type="PaxDb" id="511145-b3637"/>
<dbReference type="DNASU" id="946941"/>
<dbReference type="EnsemblBacteria" id="AAC76661">
    <property type="protein sequence ID" value="AAC76661"/>
    <property type="gene ID" value="b3637"/>
</dbReference>
<dbReference type="GeneID" id="93778350"/>
<dbReference type="GeneID" id="946941"/>
<dbReference type="KEGG" id="ecj:JW3612"/>
<dbReference type="KEGG" id="eco:b3637"/>
<dbReference type="KEGG" id="ecoc:C3026_19710"/>
<dbReference type="PATRIC" id="fig|1411691.4.peg.3069"/>
<dbReference type="EchoBASE" id="EB0879"/>
<dbReference type="eggNOG" id="COG0227">
    <property type="taxonomic scope" value="Bacteria"/>
</dbReference>
<dbReference type="HOGENOM" id="CLU_064548_3_1_6"/>
<dbReference type="InParanoid" id="P0A7M2"/>
<dbReference type="OMA" id="LHTKRIW"/>
<dbReference type="OrthoDB" id="9805609at2"/>
<dbReference type="PhylomeDB" id="P0A7M2"/>
<dbReference type="BioCyc" id="EcoCyc:EG10886-MONOMER"/>
<dbReference type="BioCyc" id="MetaCyc:EG10886-MONOMER"/>
<dbReference type="EvolutionaryTrace" id="P0A7M2"/>
<dbReference type="PRO" id="PR:P0A7M2"/>
<dbReference type="Proteomes" id="UP000000625">
    <property type="component" value="Chromosome"/>
</dbReference>
<dbReference type="GO" id="GO:0005737">
    <property type="term" value="C:cytoplasm"/>
    <property type="evidence" value="ECO:0000314"/>
    <property type="project" value="ComplexPortal"/>
</dbReference>
<dbReference type="GO" id="GO:0005829">
    <property type="term" value="C:cytosol"/>
    <property type="evidence" value="ECO:0000314"/>
    <property type="project" value="EcoCyc"/>
</dbReference>
<dbReference type="GO" id="GO:0022625">
    <property type="term" value="C:cytosolic large ribosomal subunit"/>
    <property type="evidence" value="ECO:0000314"/>
    <property type="project" value="CAFA"/>
</dbReference>
<dbReference type="GO" id="GO:0019843">
    <property type="term" value="F:rRNA binding"/>
    <property type="evidence" value="ECO:0007669"/>
    <property type="project" value="UniProtKB-KW"/>
</dbReference>
<dbReference type="GO" id="GO:0003735">
    <property type="term" value="F:structural constituent of ribosome"/>
    <property type="evidence" value="ECO:0000314"/>
    <property type="project" value="CAFA"/>
</dbReference>
<dbReference type="GO" id="GO:0002181">
    <property type="term" value="P:cytoplasmic translation"/>
    <property type="evidence" value="ECO:0000303"/>
    <property type="project" value="ComplexPortal"/>
</dbReference>
<dbReference type="GO" id="GO:0000027">
    <property type="term" value="P:ribosomal large subunit assembly"/>
    <property type="evidence" value="ECO:0000314"/>
    <property type="project" value="CAFA"/>
</dbReference>
<dbReference type="FunFam" id="2.30.170.40:FF:000001">
    <property type="entry name" value="50S ribosomal protein L28"/>
    <property type="match status" value="1"/>
</dbReference>
<dbReference type="Gene3D" id="2.30.170.40">
    <property type="entry name" value="Ribosomal protein L28/L24"/>
    <property type="match status" value="1"/>
</dbReference>
<dbReference type="HAMAP" id="MF_00373">
    <property type="entry name" value="Ribosomal_bL28"/>
    <property type="match status" value="1"/>
</dbReference>
<dbReference type="InterPro" id="IPR026569">
    <property type="entry name" value="Ribosomal_bL28"/>
</dbReference>
<dbReference type="InterPro" id="IPR034704">
    <property type="entry name" value="Ribosomal_bL28/bL31-like_sf"/>
</dbReference>
<dbReference type="InterPro" id="IPR001383">
    <property type="entry name" value="Ribosomal_bL28_bact-type"/>
</dbReference>
<dbReference type="InterPro" id="IPR037147">
    <property type="entry name" value="Ribosomal_bL28_sf"/>
</dbReference>
<dbReference type="NCBIfam" id="TIGR00009">
    <property type="entry name" value="L28"/>
    <property type="match status" value="1"/>
</dbReference>
<dbReference type="PANTHER" id="PTHR13528">
    <property type="entry name" value="39S RIBOSOMAL PROTEIN L28, MITOCHONDRIAL"/>
    <property type="match status" value="1"/>
</dbReference>
<dbReference type="PANTHER" id="PTHR13528:SF2">
    <property type="entry name" value="LARGE RIBOSOMAL SUBUNIT PROTEIN BL28M"/>
    <property type="match status" value="1"/>
</dbReference>
<dbReference type="Pfam" id="PF00830">
    <property type="entry name" value="Ribosomal_L28"/>
    <property type="match status" value="1"/>
</dbReference>
<dbReference type="SUPFAM" id="SSF143800">
    <property type="entry name" value="L28p-like"/>
    <property type="match status" value="1"/>
</dbReference>
<name>RL28_ECOLI</name>
<protein>
    <recommendedName>
        <fullName evidence="8">Large ribosomal subunit protein bL28</fullName>
    </recommendedName>
    <alternativeName>
        <fullName>50S ribosomal protein L28</fullName>
    </alternativeName>
</protein>
<organism>
    <name type="scientific">Escherichia coli (strain K12)</name>
    <dbReference type="NCBI Taxonomy" id="83333"/>
    <lineage>
        <taxon>Bacteria</taxon>
        <taxon>Pseudomonadati</taxon>
        <taxon>Pseudomonadota</taxon>
        <taxon>Gammaproteobacteria</taxon>
        <taxon>Enterobacterales</taxon>
        <taxon>Enterobacteriaceae</taxon>
        <taxon>Escherichia</taxon>
    </lineage>
</organism>
<keyword id="KW-0002">3D-structure</keyword>
<keyword id="KW-0903">Direct protein sequencing</keyword>
<keyword id="KW-1185">Reference proteome</keyword>
<keyword id="KW-0687">Ribonucleoprotein</keyword>
<keyword id="KW-0689">Ribosomal protein</keyword>
<keyword id="KW-0694">RNA-binding</keyword>
<keyword id="KW-0699">rRNA-binding</keyword>